<dbReference type="EC" id="2.7.11.1" evidence="10"/>
<dbReference type="EC" id="2.7.2.3" evidence="13"/>
<dbReference type="EMBL" id="V00572">
    <property type="protein sequence ID" value="CAA23835.1"/>
    <property type="molecule type" value="mRNA"/>
</dbReference>
<dbReference type="EMBL" id="L00160">
    <property type="protein sequence ID" value="AAA60078.1"/>
    <property type="molecule type" value="mRNA"/>
</dbReference>
<dbReference type="EMBL" id="M11968">
    <property type="protein sequence ID" value="AAA60079.1"/>
    <property type="molecule type" value="Genomic_DNA"/>
</dbReference>
<dbReference type="EMBL" id="M11958">
    <property type="protein sequence ID" value="AAA60079.1"/>
    <property type="status" value="JOINED"/>
    <property type="molecule type" value="Genomic_DNA"/>
</dbReference>
<dbReference type="EMBL" id="M11959">
    <property type="protein sequence ID" value="AAA60079.1"/>
    <property type="status" value="JOINED"/>
    <property type="molecule type" value="Genomic_DNA"/>
</dbReference>
<dbReference type="EMBL" id="M11960">
    <property type="protein sequence ID" value="AAA60079.1"/>
    <property type="status" value="JOINED"/>
    <property type="molecule type" value="Genomic_DNA"/>
</dbReference>
<dbReference type="EMBL" id="M11961">
    <property type="protein sequence ID" value="AAA60079.1"/>
    <property type="status" value="JOINED"/>
    <property type="molecule type" value="Genomic_DNA"/>
</dbReference>
<dbReference type="EMBL" id="M11962">
    <property type="protein sequence ID" value="AAA60079.1"/>
    <property type="status" value="JOINED"/>
    <property type="molecule type" value="Genomic_DNA"/>
</dbReference>
<dbReference type="EMBL" id="M11963">
    <property type="protein sequence ID" value="AAA60079.1"/>
    <property type="status" value="JOINED"/>
    <property type="molecule type" value="Genomic_DNA"/>
</dbReference>
<dbReference type="EMBL" id="M11964">
    <property type="protein sequence ID" value="AAA60079.1"/>
    <property type="status" value="JOINED"/>
    <property type="molecule type" value="Genomic_DNA"/>
</dbReference>
<dbReference type="EMBL" id="M11965">
    <property type="protein sequence ID" value="AAA60079.1"/>
    <property type="status" value="JOINED"/>
    <property type="molecule type" value="Genomic_DNA"/>
</dbReference>
<dbReference type="EMBL" id="M11966">
    <property type="protein sequence ID" value="AAA60079.1"/>
    <property type="status" value="JOINED"/>
    <property type="molecule type" value="Genomic_DNA"/>
</dbReference>
<dbReference type="EMBL" id="M11967">
    <property type="protein sequence ID" value="AAA60079.1"/>
    <property type="status" value="JOINED"/>
    <property type="molecule type" value="Genomic_DNA"/>
</dbReference>
<dbReference type="EMBL" id="AY423725">
    <property type="protein sequence ID" value="AAS00488.1"/>
    <property type="molecule type" value="mRNA"/>
</dbReference>
<dbReference type="EMBL" id="AB062432">
    <property type="protein sequence ID" value="BAB93495.1"/>
    <property type="molecule type" value="mRNA"/>
</dbReference>
<dbReference type="EMBL" id="AK291081">
    <property type="protein sequence ID" value="BAF83770.1"/>
    <property type="molecule type" value="mRNA"/>
</dbReference>
<dbReference type="EMBL" id="AK301740">
    <property type="protein sequence ID" value="BAH13545.1"/>
    <property type="molecule type" value="mRNA"/>
</dbReference>
<dbReference type="EMBL" id="AK312280">
    <property type="protein sequence ID" value="BAG35209.1"/>
    <property type="molecule type" value="mRNA"/>
</dbReference>
<dbReference type="EMBL" id="CR456716">
    <property type="protein sequence ID" value="CAG32997.1"/>
    <property type="molecule type" value="mRNA"/>
</dbReference>
<dbReference type="EMBL" id="AL049589">
    <property type="protein sequence ID" value="CAI42951.1"/>
    <property type="molecule type" value="Genomic_DNA"/>
</dbReference>
<dbReference type="EMBL" id="CH471104">
    <property type="protein sequence ID" value="EAW98604.1"/>
    <property type="molecule type" value="Genomic_DNA"/>
</dbReference>
<dbReference type="EMBL" id="BC023234">
    <property type="protein sequence ID" value="AAH23234.1"/>
    <property type="molecule type" value="mRNA"/>
</dbReference>
<dbReference type="EMBL" id="BC103752">
    <property type="protein sequence ID" value="AAI03753.1"/>
    <property type="molecule type" value="mRNA"/>
</dbReference>
<dbReference type="EMBL" id="BC104837">
    <property type="protein sequence ID" value="AAI04838.1"/>
    <property type="molecule type" value="mRNA"/>
</dbReference>
<dbReference type="EMBL" id="BC113568">
    <property type="protein sequence ID" value="AAI13569.1"/>
    <property type="molecule type" value="mRNA"/>
</dbReference>
<dbReference type="EMBL" id="M34017">
    <property type="protein sequence ID" value="AAA60103.1"/>
    <property type="molecule type" value="Genomic_DNA"/>
</dbReference>
<dbReference type="CCDS" id="CCDS14438.1">
    <molecule id="P00558-1"/>
</dbReference>
<dbReference type="PIR" id="I59050">
    <property type="entry name" value="KIHUG"/>
</dbReference>
<dbReference type="RefSeq" id="NP_000282.1">
    <molecule id="P00558-1"/>
    <property type="nucleotide sequence ID" value="NM_000291.4"/>
</dbReference>
<dbReference type="PDB" id="2WZB">
    <property type="method" value="X-ray"/>
    <property type="resolution" value="1.47 A"/>
    <property type="chains" value="A=2-417"/>
</dbReference>
<dbReference type="PDB" id="2WZC">
    <property type="method" value="X-ray"/>
    <property type="resolution" value="1.50 A"/>
    <property type="chains" value="A=2-417"/>
</dbReference>
<dbReference type="PDB" id="2WZD">
    <property type="method" value="X-ray"/>
    <property type="resolution" value="1.56 A"/>
    <property type="chains" value="A=1-417"/>
</dbReference>
<dbReference type="PDB" id="2X13">
    <property type="method" value="X-ray"/>
    <property type="resolution" value="1.74 A"/>
    <property type="chains" value="A=2-417"/>
</dbReference>
<dbReference type="PDB" id="2X14">
    <property type="method" value="X-ray"/>
    <property type="resolution" value="1.90 A"/>
    <property type="chains" value="A=2-417"/>
</dbReference>
<dbReference type="PDB" id="2X15">
    <property type="method" value="X-ray"/>
    <property type="resolution" value="2.10 A"/>
    <property type="chains" value="A=2-417"/>
</dbReference>
<dbReference type="PDB" id="2XE6">
    <property type="method" value="X-ray"/>
    <property type="resolution" value="1.74 A"/>
    <property type="chains" value="A=1-417"/>
</dbReference>
<dbReference type="PDB" id="2XE7">
    <property type="method" value="X-ray"/>
    <property type="resolution" value="2.20 A"/>
    <property type="chains" value="A=1-417"/>
</dbReference>
<dbReference type="PDB" id="2XE8">
    <property type="method" value="X-ray"/>
    <property type="resolution" value="1.79 A"/>
    <property type="chains" value="A=1-417"/>
</dbReference>
<dbReference type="PDB" id="2Y3I">
    <property type="method" value="X-ray"/>
    <property type="resolution" value="2.90 A"/>
    <property type="chains" value="A/D=1-416"/>
</dbReference>
<dbReference type="PDB" id="2YBE">
    <property type="method" value="X-ray"/>
    <property type="resolution" value="2.00 A"/>
    <property type="chains" value="A=1-417"/>
</dbReference>
<dbReference type="PDB" id="2ZGV">
    <property type="method" value="X-ray"/>
    <property type="resolution" value="2.00 A"/>
    <property type="chains" value="A=1-417"/>
</dbReference>
<dbReference type="PDB" id="3C39">
    <property type="method" value="X-ray"/>
    <property type="resolution" value="1.85 A"/>
    <property type="chains" value="A/B=1-417"/>
</dbReference>
<dbReference type="PDB" id="3C3A">
    <property type="method" value="X-ray"/>
    <property type="resolution" value="2.30 A"/>
    <property type="chains" value="A/B=1-417"/>
</dbReference>
<dbReference type="PDB" id="3C3B">
    <property type="method" value="X-ray"/>
    <property type="resolution" value="1.80 A"/>
    <property type="chains" value="A/B=1-417"/>
</dbReference>
<dbReference type="PDB" id="3C3C">
    <property type="method" value="X-ray"/>
    <property type="resolution" value="2.40 A"/>
    <property type="chains" value="A/B=1-417"/>
</dbReference>
<dbReference type="PDB" id="3ZOZ">
    <property type="method" value="X-ray"/>
    <property type="resolution" value="1.95 A"/>
    <property type="chains" value="A=1-417"/>
</dbReference>
<dbReference type="PDB" id="4AXX">
    <property type="method" value="X-ray"/>
    <property type="resolution" value="1.74 A"/>
    <property type="chains" value="A=1-417"/>
</dbReference>
<dbReference type="PDB" id="4O33">
    <property type="method" value="X-ray"/>
    <property type="resolution" value="2.10 A"/>
    <property type="chains" value="A=1-417"/>
</dbReference>
<dbReference type="PDB" id="5M1R">
    <property type="method" value="X-ray"/>
    <property type="resolution" value="1.64 A"/>
    <property type="chains" value="A=2-417"/>
</dbReference>
<dbReference type="PDB" id="5M3U">
    <property type="method" value="X-ray"/>
    <property type="resolution" value="1.81 A"/>
    <property type="chains" value="A=2-417"/>
</dbReference>
<dbReference type="PDB" id="5M6Z">
    <property type="method" value="X-ray"/>
    <property type="resolution" value="1.67 A"/>
    <property type="chains" value="A=2-417"/>
</dbReference>
<dbReference type="PDB" id="5MXM">
    <property type="method" value="X-ray"/>
    <property type="resolution" value="2.05 A"/>
    <property type="chains" value="A=2-417"/>
</dbReference>
<dbReference type="PDB" id="5NP8">
    <property type="method" value="X-ray"/>
    <property type="resolution" value="1.90 A"/>
    <property type="chains" value="A=1-417"/>
</dbReference>
<dbReference type="PDB" id="5O7D">
    <property type="method" value="X-ray"/>
    <property type="resolution" value="1.84 A"/>
    <property type="chains" value="A=1-417"/>
</dbReference>
<dbReference type="PDB" id="8YHP">
    <property type="method" value="X-ray"/>
    <property type="resolution" value="1.95 A"/>
    <property type="chains" value="A=2-417"/>
</dbReference>
<dbReference type="PDBsum" id="2WZB"/>
<dbReference type="PDBsum" id="2WZC"/>
<dbReference type="PDBsum" id="2WZD"/>
<dbReference type="PDBsum" id="2X13"/>
<dbReference type="PDBsum" id="2X14"/>
<dbReference type="PDBsum" id="2X15"/>
<dbReference type="PDBsum" id="2XE6"/>
<dbReference type="PDBsum" id="2XE7"/>
<dbReference type="PDBsum" id="2XE8"/>
<dbReference type="PDBsum" id="2Y3I"/>
<dbReference type="PDBsum" id="2YBE"/>
<dbReference type="PDBsum" id="2ZGV"/>
<dbReference type="PDBsum" id="3C39"/>
<dbReference type="PDBsum" id="3C3A"/>
<dbReference type="PDBsum" id="3C3B"/>
<dbReference type="PDBsum" id="3C3C"/>
<dbReference type="PDBsum" id="3ZOZ"/>
<dbReference type="PDBsum" id="4AXX"/>
<dbReference type="PDBsum" id="4O33"/>
<dbReference type="PDBsum" id="5M1R"/>
<dbReference type="PDBsum" id="5M3U"/>
<dbReference type="PDBsum" id="5M6Z"/>
<dbReference type="PDBsum" id="5MXM"/>
<dbReference type="PDBsum" id="5NP8"/>
<dbReference type="PDBsum" id="5O7D"/>
<dbReference type="PDBsum" id="8YHP"/>
<dbReference type="SMR" id="P00558"/>
<dbReference type="BioGRID" id="111251">
    <property type="interactions" value="354"/>
</dbReference>
<dbReference type="DIP" id="DIP-33679N"/>
<dbReference type="FunCoup" id="P00558">
    <property type="interactions" value="1372"/>
</dbReference>
<dbReference type="IntAct" id="P00558">
    <property type="interactions" value="84"/>
</dbReference>
<dbReference type="MINT" id="P00558"/>
<dbReference type="STRING" id="9606.ENSP00000362413"/>
<dbReference type="BindingDB" id="P00558"/>
<dbReference type="ChEMBL" id="CHEMBL2886"/>
<dbReference type="DrugBank" id="DB04510">
    <property type="generic name" value="3-phospho-D-glyceric acid"/>
</dbReference>
<dbReference type="DrugBank" id="DB00787">
    <property type="generic name" value="Acyclovir"/>
</dbReference>
<dbReference type="DrugBank" id="DB03909">
    <property type="generic name" value="Adenosine-5'-[Beta, Gamma-Methylene]Triphosphate"/>
</dbReference>
<dbReference type="DrugBank" id="DB11638">
    <property type="generic name" value="Artenimol"/>
</dbReference>
<dbReference type="DrugBank" id="DB09130">
    <property type="generic name" value="Copper"/>
</dbReference>
<dbReference type="DrugBank" id="DB00709">
    <property type="generic name" value="Lamivudine"/>
</dbReference>
<dbReference type="MoonDB" id="P00558">
    <property type="type" value="Curated"/>
</dbReference>
<dbReference type="MoonProt" id="P00558"/>
<dbReference type="GlyCosmos" id="P00558">
    <property type="glycosylation" value="6 sites, 1 glycan"/>
</dbReference>
<dbReference type="GlyGen" id="P00558">
    <property type="glycosylation" value="6 sites, 1 O-linked glycan (6 sites)"/>
</dbReference>
<dbReference type="iPTMnet" id="P00558"/>
<dbReference type="MetOSite" id="P00558"/>
<dbReference type="PhosphoSitePlus" id="P00558"/>
<dbReference type="SwissPalm" id="P00558"/>
<dbReference type="BioMuta" id="PGK1"/>
<dbReference type="DMDM" id="52788229"/>
<dbReference type="OGP" id="P00558"/>
<dbReference type="REPRODUCTION-2DPAGE" id="IPI00169383"/>
<dbReference type="REPRODUCTION-2DPAGE" id="P00558"/>
<dbReference type="CPTAC" id="CPTAC-562"/>
<dbReference type="CPTAC" id="CPTAC-563"/>
<dbReference type="jPOST" id="P00558"/>
<dbReference type="MassIVE" id="P00558"/>
<dbReference type="PaxDb" id="9606-ENSP00000362413"/>
<dbReference type="PeptideAtlas" id="P00558"/>
<dbReference type="PRIDE" id="P00558"/>
<dbReference type="ProteomicsDB" id="51266">
    <molecule id="P00558-1"/>
</dbReference>
<dbReference type="ProteomicsDB" id="6847"/>
<dbReference type="Pumba" id="P00558"/>
<dbReference type="TopDownProteomics" id="P00558-1">
    <molecule id="P00558-1"/>
</dbReference>
<dbReference type="Antibodypedia" id="4108">
    <property type="antibodies" value="479 antibodies from 39 providers"/>
</dbReference>
<dbReference type="DNASU" id="5230"/>
<dbReference type="Ensembl" id="ENST00000373316.5">
    <molecule id="P00558-1"/>
    <property type="protein sequence ID" value="ENSP00000362413.4"/>
    <property type="gene ID" value="ENSG00000102144.15"/>
</dbReference>
<dbReference type="Ensembl" id="ENST00000644362.1">
    <molecule id="P00558-2"/>
    <property type="protein sequence ID" value="ENSP00000496140.1"/>
    <property type="gene ID" value="ENSG00000102144.15"/>
</dbReference>
<dbReference type="GeneID" id="5230"/>
<dbReference type="KEGG" id="hsa:5230"/>
<dbReference type="MANE-Select" id="ENST00000373316.5">
    <property type="protein sequence ID" value="ENSP00000362413.4"/>
    <property type="RefSeq nucleotide sequence ID" value="NM_000291.4"/>
    <property type="RefSeq protein sequence ID" value="NP_000282.1"/>
</dbReference>
<dbReference type="AGR" id="HGNC:8896"/>
<dbReference type="CTD" id="5230"/>
<dbReference type="DisGeNET" id="5230"/>
<dbReference type="GeneCards" id="PGK1"/>
<dbReference type="HGNC" id="HGNC:8896">
    <property type="gene designation" value="PGK1"/>
</dbReference>
<dbReference type="HPA" id="ENSG00000102144">
    <property type="expression patterns" value="Low tissue specificity"/>
</dbReference>
<dbReference type="MalaCards" id="PGK1"/>
<dbReference type="MIM" id="300653">
    <property type="type" value="phenotype"/>
</dbReference>
<dbReference type="MIM" id="311800">
    <property type="type" value="gene"/>
</dbReference>
<dbReference type="neXtProt" id="NX_P00558"/>
<dbReference type="OpenTargets" id="ENSG00000102144"/>
<dbReference type="Orphanet" id="713">
    <property type="disease" value="Glycogen storage disease due to phosphoglycerate kinase 1 deficiency"/>
</dbReference>
<dbReference type="PharmGKB" id="PA33234"/>
<dbReference type="VEuPathDB" id="HostDB:ENSG00000102144"/>
<dbReference type="eggNOG" id="KOG1367">
    <property type="taxonomic scope" value="Eukaryota"/>
</dbReference>
<dbReference type="GeneTree" id="ENSGT00390000008820"/>
<dbReference type="HOGENOM" id="CLU_025427_0_0_1"/>
<dbReference type="InParanoid" id="P00558"/>
<dbReference type="OMA" id="DMIFDIG"/>
<dbReference type="PAN-GO" id="P00558">
    <property type="GO annotations" value="6 GO annotations based on evolutionary models"/>
</dbReference>
<dbReference type="PhylomeDB" id="P00558"/>
<dbReference type="TreeFam" id="TF300489"/>
<dbReference type="BioCyc" id="MetaCyc:HS02359-MONOMER"/>
<dbReference type="PathwayCommons" id="P00558"/>
<dbReference type="Reactome" id="R-HSA-70171">
    <property type="pathway name" value="Glycolysis"/>
</dbReference>
<dbReference type="Reactome" id="R-HSA-70263">
    <property type="pathway name" value="Gluconeogenesis"/>
</dbReference>
<dbReference type="Reactome" id="R-HSA-9636667">
    <property type="pathway name" value="Manipulation of host energy metabolism"/>
</dbReference>
<dbReference type="SABIO-RK" id="P00558"/>
<dbReference type="SignaLink" id="P00558"/>
<dbReference type="SIGNOR" id="P00558"/>
<dbReference type="UniPathway" id="UPA00109">
    <property type="reaction ID" value="UER00185"/>
</dbReference>
<dbReference type="BioGRID-ORCS" id="5230">
    <property type="hits" value="255 hits in 804 CRISPR screens"/>
</dbReference>
<dbReference type="CD-CODE" id="91857CE7">
    <property type="entry name" value="Nucleolus"/>
</dbReference>
<dbReference type="CD-CODE" id="FB4E32DD">
    <property type="entry name" value="Presynaptic clusters and postsynaptic densities"/>
</dbReference>
<dbReference type="ChiTaRS" id="PGK1">
    <property type="organism name" value="human"/>
</dbReference>
<dbReference type="EvolutionaryTrace" id="P00558"/>
<dbReference type="GeneWiki" id="PGK1"/>
<dbReference type="GenomeRNAi" id="5230"/>
<dbReference type="Pharos" id="P00558">
    <property type="development level" value="Tchem"/>
</dbReference>
<dbReference type="PRO" id="PR:P00558"/>
<dbReference type="Proteomes" id="UP000005640">
    <property type="component" value="Chromosome X"/>
</dbReference>
<dbReference type="RNAct" id="P00558">
    <property type="molecule type" value="protein"/>
</dbReference>
<dbReference type="Bgee" id="ENSG00000102144">
    <property type="expression patterns" value="Expressed in esophagus squamous epithelium and 208 other cell types or tissues"/>
</dbReference>
<dbReference type="ExpressionAtlas" id="P00558">
    <property type="expression patterns" value="baseline and differential"/>
</dbReference>
<dbReference type="GO" id="GO:0005829">
    <property type="term" value="C:cytosol"/>
    <property type="evidence" value="ECO:0000314"/>
    <property type="project" value="UniProtKB"/>
</dbReference>
<dbReference type="GO" id="GO:0070062">
    <property type="term" value="C:extracellular exosome"/>
    <property type="evidence" value="ECO:0007005"/>
    <property type="project" value="UniProtKB"/>
</dbReference>
<dbReference type="GO" id="GO:0005615">
    <property type="term" value="C:extracellular space"/>
    <property type="evidence" value="ECO:0000314"/>
    <property type="project" value="CAFA"/>
</dbReference>
<dbReference type="GO" id="GO:0016020">
    <property type="term" value="C:membrane"/>
    <property type="evidence" value="ECO:0007005"/>
    <property type="project" value="UniProtKB"/>
</dbReference>
<dbReference type="GO" id="GO:0045121">
    <property type="term" value="C:membrane raft"/>
    <property type="evidence" value="ECO:0000314"/>
    <property type="project" value="UniProtKB"/>
</dbReference>
<dbReference type="GO" id="GO:0005759">
    <property type="term" value="C:mitochondrial matrix"/>
    <property type="evidence" value="ECO:0000314"/>
    <property type="project" value="UniProtKB"/>
</dbReference>
<dbReference type="GO" id="GO:0043531">
    <property type="term" value="F:ADP binding"/>
    <property type="evidence" value="ECO:0000318"/>
    <property type="project" value="GO_Central"/>
</dbReference>
<dbReference type="GO" id="GO:0005524">
    <property type="term" value="F:ATP binding"/>
    <property type="evidence" value="ECO:0000250"/>
    <property type="project" value="UniProtKB"/>
</dbReference>
<dbReference type="GO" id="GO:0046872">
    <property type="term" value="F:metal ion binding"/>
    <property type="evidence" value="ECO:0007669"/>
    <property type="project" value="UniProtKB-KW"/>
</dbReference>
<dbReference type="GO" id="GO:0004618">
    <property type="term" value="F:phosphoglycerate kinase activity"/>
    <property type="evidence" value="ECO:0000315"/>
    <property type="project" value="CAFA"/>
</dbReference>
<dbReference type="GO" id="GO:0106310">
    <property type="term" value="F:protein serine kinase activity"/>
    <property type="evidence" value="ECO:0007669"/>
    <property type="project" value="RHEA"/>
</dbReference>
<dbReference type="GO" id="GO:0004674">
    <property type="term" value="F:protein serine/threonine kinase activity"/>
    <property type="evidence" value="ECO:0000314"/>
    <property type="project" value="UniProtKB"/>
</dbReference>
<dbReference type="GO" id="GO:0047134">
    <property type="term" value="F:protein-disulfide reductase [NAD(P)H] activity"/>
    <property type="evidence" value="ECO:0000315"/>
    <property type="project" value="CAFA"/>
</dbReference>
<dbReference type="GO" id="GO:0044325">
    <property type="term" value="F:transmembrane transporter binding"/>
    <property type="evidence" value="ECO:0007669"/>
    <property type="project" value="Ensembl"/>
</dbReference>
<dbReference type="GO" id="GO:0061621">
    <property type="term" value="P:canonical glycolysis"/>
    <property type="evidence" value="ECO:0000304"/>
    <property type="project" value="Reactome"/>
</dbReference>
<dbReference type="GO" id="GO:0071456">
    <property type="term" value="P:cellular response to hypoxia"/>
    <property type="evidence" value="ECO:0000314"/>
    <property type="project" value="CAFA"/>
</dbReference>
<dbReference type="GO" id="GO:0030855">
    <property type="term" value="P:epithelial cell differentiation"/>
    <property type="evidence" value="ECO:0000270"/>
    <property type="project" value="UniProtKB"/>
</dbReference>
<dbReference type="GO" id="GO:0006094">
    <property type="term" value="P:gluconeogenesis"/>
    <property type="evidence" value="ECO:0000318"/>
    <property type="project" value="GO_Central"/>
</dbReference>
<dbReference type="GO" id="GO:0006096">
    <property type="term" value="P:glycolytic process"/>
    <property type="evidence" value="ECO:0000315"/>
    <property type="project" value="CAFA"/>
</dbReference>
<dbReference type="GO" id="GO:0160218">
    <property type="term" value="P:negative regulation of acetyl-CoA biosynthetic process from pyruvate"/>
    <property type="evidence" value="ECO:0000314"/>
    <property type="project" value="UniProtKB"/>
</dbReference>
<dbReference type="GO" id="GO:0016525">
    <property type="term" value="P:negative regulation of angiogenesis"/>
    <property type="evidence" value="ECO:0000315"/>
    <property type="project" value="CAFA"/>
</dbReference>
<dbReference type="GO" id="GO:0031639">
    <property type="term" value="P:plasminogen activation"/>
    <property type="evidence" value="ECO:0000315"/>
    <property type="project" value="CAFA"/>
</dbReference>
<dbReference type="CDD" id="cd00318">
    <property type="entry name" value="Phosphoglycerate_kinase"/>
    <property type="match status" value="1"/>
</dbReference>
<dbReference type="FunFam" id="3.40.50.1260:FF:000019">
    <property type="entry name" value="Phosphoglycerate kinase 1"/>
    <property type="match status" value="1"/>
</dbReference>
<dbReference type="FunFam" id="3.40.50.1260:FF:000031">
    <property type="entry name" value="Phosphoglycerate kinase 1"/>
    <property type="match status" value="1"/>
</dbReference>
<dbReference type="Gene3D" id="3.40.50.1260">
    <property type="entry name" value="Phosphoglycerate kinase, N-terminal domain"/>
    <property type="match status" value="3"/>
</dbReference>
<dbReference type="HAMAP" id="MF_00145">
    <property type="entry name" value="Phosphoglyc_kinase"/>
    <property type="match status" value="1"/>
</dbReference>
<dbReference type="InterPro" id="IPR001576">
    <property type="entry name" value="Phosphoglycerate_kinase"/>
</dbReference>
<dbReference type="InterPro" id="IPR015911">
    <property type="entry name" value="Phosphoglycerate_kinase_CS"/>
</dbReference>
<dbReference type="InterPro" id="IPR015824">
    <property type="entry name" value="Phosphoglycerate_kinase_N"/>
</dbReference>
<dbReference type="InterPro" id="IPR036043">
    <property type="entry name" value="Phosphoglycerate_kinase_sf"/>
</dbReference>
<dbReference type="PANTHER" id="PTHR11406">
    <property type="entry name" value="PHOSPHOGLYCERATE KINASE"/>
    <property type="match status" value="1"/>
</dbReference>
<dbReference type="PANTHER" id="PTHR11406:SF14">
    <property type="entry name" value="PHOSPHOGLYCERATE KINASE 1"/>
    <property type="match status" value="1"/>
</dbReference>
<dbReference type="Pfam" id="PF00162">
    <property type="entry name" value="PGK"/>
    <property type="match status" value="1"/>
</dbReference>
<dbReference type="PIRSF" id="PIRSF000724">
    <property type="entry name" value="Pgk"/>
    <property type="match status" value="1"/>
</dbReference>
<dbReference type="PRINTS" id="PR00477">
    <property type="entry name" value="PHGLYCKINASE"/>
</dbReference>
<dbReference type="SUPFAM" id="SSF53748">
    <property type="entry name" value="Phosphoglycerate kinase"/>
    <property type="match status" value="1"/>
</dbReference>
<dbReference type="PROSITE" id="PS00111">
    <property type="entry name" value="PGLYCERATE_KINASE"/>
    <property type="match status" value="1"/>
</dbReference>
<evidence type="ECO:0000250" key="1">
    <source>
        <dbReference type="UniProtKB" id="P09411"/>
    </source>
</evidence>
<evidence type="ECO:0000250" key="2">
    <source>
        <dbReference type="UniProtKB" id="Q7SIB7"/>
    </source>
</evidence>
<evidence type="ECO:0000269" key="3">
    <source>
    </source>
</evidence>
<evidence type="ECO:0000269" key="4">
    <source>
    </source>
</evidence>
<evidence type="ECO:0000269" key="5">
    <source>
    </source>
</evidence>
<evidence type="ECO:0000269" key="6">
    <source>
    </source>
</evidence>
<evidence type="ECO:0000269" key="7">
    <source>
    </source>
</evidence>
<evidence type="ECO:0000269" key="8">
    <source>
    </source>
</evidence>
<evidence type="ECO:0000269" key="9">
    <source>
    </source>
</evidence>
<evidence type="ECO:0000269" key="10">
    <source>
    </source>
</evidence>
<evidence type="ECO:0000269" key="11">
    <source>
    </source>
</evidence>
<evidence type="ECO:0000269" key="12">
    <source>
    </source>
</evidence>
<evidence type="ECO:0000269" key="13">
    <source>
    </source>
</evidence>
<evidence type="ECO:0000269" key="14">
    <source>
    </source>
</evidence>
<evidence type="ECO:0000269" key="15">
    <source>
    </source>
</evidence>
<evidence type="ECO:0000269" key="16">
    <source>
    </source>
</evidence>
<evidence type="ECO:0000269" key="17">
    <source>
    </source>
</evidence>
<evidence type="ECO:0000269" key="18">
    <source>
    </source>
</evidence>
<evidence type="ECO:0000269" key="19">
    <source>
    </source>
</evidence>
<evidence type="ECO:0000269" key="20">
    <source>
    </source>
</evidence>
<evidence type="ECO:0000269" key="21">
    <source>
    </source>
</evidence>
<evidence type="ECO:0000269" key="22">
    <source>
    </source>
</evidence>
<evidence type="ECO:0000269" key="23">
    <source>
    </source>
</evidence>
<evidence type="ECO:0000303" key="24">
    <source>
    </source>
</evidence>
<evidence type="ECO:0000305" key="25"/>
<evidence type="ECO:0007744" key="26">
    <source>
        <dbReference type="PDB" id="3C39"/>
    </source>
</evidence>
<evidence type="ECO:0007744" key="27">
    <source>
        <dbReference type="PDB" id="3C3A"/>
    </source>
</evidence>
<evidence type="ECO:0007744" key="28">
    <source>
        <dbReference type="PDB" id="3C3B"/>
    </source>
</evidence>
<evidence type="ECO:0007744" key="29">
    <source>
        <dbReference type="PDB" id="3C3C"/>
    </source>
</evidence>
<evidence type="ECO:0007744" key="30">
    <source>
    </source>
</evidence>
<evidence type="ECO:0007744" key="31">
    <source>
    </source>
</evidence>
<evidence type="ECO:0007744" key="32">
    <source>
    </source>
</evidence>
<evidence type="ECO:0007744" key="33">
    <source>
    </source>
</evidence>
<evidence type="ECO:0007744" key="34">
    <source>
    </source>
</evidence>
<evidence type="ECO:0007744" key="35">
    <source>
    </source>
</evidence>
<evidence type="ECO:0007744" key="36">
    <source>
    </source>
</evidence>
<evidence type="ECO:0007744" key="37">
    <source>
    </source>
</evidence>
<evidence type="ECO:0007829" key="38">
    <source>
        <dbReference type="PDB" id="2WZB"/>
    </source>
</evidence>
<evidence type="ECO:0007829" key="39">
    <source>
        <dbReference type="PDB" id="2XE8"/>
    </source>
</evidence>
<evidence type="ECO:0007829" key="40">
    <source>
        <dbReference type="PDB" id="3C3A"/>
    </source>
</evidence>
<evidence type="ECO:0007829" key="41">
    <source>
        <dbReference type="PDB" id="3C3B"/>
    </source>
</evidence>
<evidence type="ECO:0007829" key="42">
    <source>
        <dbReference type="PDB" id="5M1R"/>
    </source>
</evidence>
<evidence type="ECO:0007829" key="43">
    <source>
        <dbReference type="PDB" id="5M6Z"/>
    </source>
</evidence>
<feature type="initiator methionine" description="Removed" evidence="17 35">
    <location>
        <position position="1"/>
    </location>
</feature>
<feature type="chain" id="PRO_0000145831" description="Phosphoglycerate kinase 1">
    <location>
        <begin position="2"/>
        <end position="417"/>
    </location>
</feature>
<feature type="region of interest" description="Mitochondrial targeting region exposed following cis-trans isomerization by PIN1 and recognized by the TOM complex for mitochondrial translocation of the protein" evidence="10">
    <location>
        <begin position="38"/>
        <end position="43"/>
    </location>
</feature>
<feature type="binding site" evidence="5 26 27 29">
    <location>
        <position position="23"/>
    </location>
    <ligand>
        <name>(2R)-3-phosphoglycerate</name>
        <dbReference type="ChEBI" id="CHEBI:58272"/>
    </ligand>
</feature>
<feature type="binding site" evidence="2">
    <location>
        <position position="24"/>
    </location>
    <ligand>
        <name>(2R)-3-phosphoglycerate</name>
        <dbReference type="ChEBI" id="CHEBI:58272"/>
    </ligand>
</feature>
<feature type="binding site" evidence="5 26 27 29">
    <location>
        <position position="25"/>
    </location>
    <ligand>
        <name>(2R)-3-phosphoglycerate</name>
        <dbReference type="ChEBI" id="CHEBI:58272"/>
    </ligand>
</feature>
<feature type="binding site" evidence="2">
    <location>
        <position position="26"/>
    </location>
    <ligand>
        <name>(2R)-3-phosphoglycerate</name>
        <dbReference type="ChEBI" id="CHEBI:58272"/>
    </ligand>
</feature>
<feature type="binding site" evidence="5 26 27 29">
    <location>
        <position position="38"/>
    </location>
    <ligand>
        <name>(2R)-3-phosphoglycerate</name>
        <dbReference type="ChEBI" id="CHEBI:58272"/>
    </ligand>
</feature>
<feature type="binding site" evidence="2">
    <location>
        <position position="39"/>
    </location>
    <ligand>
        <name>(2R)-3-phosphoglycerate</name>
        <dbReference type="ChEBI" id="CHEBI:58272"/>
    </ligand>
</feature>
<feature type="binding site" evidence="5 26 29">
    <location>
        <position position="62"/>
    </location>
    <ligand>
        <name>(2R)-3-phosphoglycerate</name>
        <dbReference type="ChEBI" id="CHEBI:58272"/>
    </ligand>
</feature>
<feature type="binding site" evidence="2">
    <location>
        <position position="63"/>
    </location>
    <ligand>
        <name>(2R)-3-phosphoglycerate</name>
        <dbReference type="ChEBI" id="CHEBI:58272"/>
    </ligand>
</feature>
<feature type="binding site" evidence="5 26 29">
    <location>
        <position position="65"/>
    </location>
    <ligand>
        <name>(2R)-3-phosphoglycerate</name>
        <dbReference type="ChEBI" id="CHEBI:58272"/>
    </ligand>
</feature>
<feature type="binding site" evidence="2">
    <location>
        <position position="66"/>
    </location>
    <ligand>
        <name>(2R)-3-phosphoglycerate</name>
        <dbReference type="ChEBI" id="CHEBI:58272"/>
    </ligand>
</feature>
<feature type="binding site" evidence="5 26 27 29">
    <location>
        <position position="122"/>
    </location>
    <ligand>
        <name>(2R)-3-phosphoglycerate</name>
        <dbReference type="ChEBI" id="CHEBI:58272"/>
    </ligand>
</feature>
<feature type="binding site" evidence="2">
    <location>
        <position position="123"/>
    </location>
    <ligand>
        <name>(2R)-3-phosphoglycerate</name>
        <dbReference type="ChEBI" id="CHEBI:58272"/>
    </ligand>
</feature>
<feature type="binding site" evidence="5 26 27 29">
    <location>
        <position position="170"/>
    </location>
    <ligand>
        <name>(2R)-3-phosphoglycerate</name>
        <dbReference type="ChEBI" id="CHEBI:58272"/>
    </ligand>
</feature>
<feature type="binding site" evidence="2">
    <location>
        <position position="171"/>
    </location>
    <ligand>
        <name>(2R)-3-phosphoglycerate</name>
        <dbReference type="ChEBI" id="CHEBI:58272"/>
    </ligand>
</feature>
<feature type="binding site" evidence="5 27">
    <location>
        <position position="214"/>
    </location>
    <ligand>
        <name>ADP</name>
        <dbReference type="ChEBI" id="CHEBI:456216"/>
    </ligand>
</feature>
<feature type="binding site" evidence="5 28 29">
    <location>
        <position position="214"/>
    </location>
    <ligand>
        <name>CDP</name>
        <dbReference type="ChEBI" id="CHEBI:58069"/>
    </ligand>
</feature>
<feature type="binding site" evidence="2">
    <location>
        <position position="215"/>
    </location>
    <ligand>
        <name>AMP</name>
        <dbReference type="ChEBI" id="CHEBI:456215"/>
    </ligand>
</feature>
<feature type="binding site" evidence="2">
    <location>
        <position position="215"/>
    </location>
    <ligand>
        <name>ATP</name>
        <dbReference type="ChEBI" id="CHEBI:30616"/>
    </ligand>
</feature>
<feature type="binding site" evidence="5 27">
    <location>
        <position position="215"/>
    </location>
    <ligand>
        <name>Mg(2+)</name>
        <dbReference type="ChEBI" id="CHEBI:18420"/>
    </ligand>
</feature>
<feature type="binding site" evidence="2">
    <location>
        <position position="216"/>
    </location>
    <ligand>
        <name>AMP</name>
        <dbReference type="ChEBI" id="CHEBI:456215"/>
    </ligand>
</feature>
<feature type="binding site" evidence="5 27 29">
    <location>
        <position position="218"/>
    </location>
    <ligand>
        <name>Mg(2+)</name>
        <dbReference type="ChEBI" id="CHEBI:18420"/>
    </ligand>
</feature>
<feature type="binding site" evidence="5 29">
    <location>
        <position position="219"/>
    </location>
    <ligand>
        <name>CDP</name>
        <dbReference type="ChEBI" id="CHEBI:58069"/>
    </ligand>
</feature>
<feature type="binding site" evidence="5 27">
    <location>
        <position position="219"/>
    </location>
    <ligand>
        <name>Mg(2+)</name>
        <dbReference type="ChEBI" id="CHEBI:18420"/>
    </ligand>
</feature>
<feature type="binding site" evidence="2">
    <location>
        <position position="220"/>
    </location>
    <ligand>
        <name>AMP</name>
        <dbReference type="ChEBI" id="CHEBI:456215"/>
    </ligand>
</feature>
<feature type="binding site" evidence="2">
    <location>
        <position position="220"/>
    </location>
    <ligand>
        <name>ATP</name>
        <dbReference type="ChEBI" id="CHEBI:30616"/>
    </ligand>
</feature>
<feature type="binding site" evidence="5 27">
    <location>
        <position position="238"/>
    </location>
    <ligand>
        <name>ADP</name>
        <dbReference type="ChEBI" id="CHEBI:456216"/>
    </ligand>
</feature>
<feature type="binding site" evidence="5 28">
    <location>
        <position position="238"/>
    </location>
    <ligand>
        <name>CDP</name>
        <dbReference type="ChEBI" id="CHEBI:58069"/>
    </ligand>
</feature>
<feature type="binding site" evidence="2">
    <location>
        <position position="239"/>
    </location>
    <ligand>
        <name>AMP</name>
        <dbReference type="ChEBI" id="CHEBI:456215"/>
    </ligand>
</feature>
<feature type="binding site" evidence="2">
    <location>
        <position position="239"/>
    </location>
    <ligand>
        <name>ATP</name>
        <dbReference type="ChEBI" id="CHEBI:30616"/>
    </ligand>
</feature>
<feature type="binding site" evidence="2">
    <location>
        <position position="313"/>
    </location>
    <ligand>
        <name>AMP</name>
        <dbReference type="ChEBI" id="CHEBI:456215"/>
    </ligand>
</feature>
<feature type="binding site" evidence="2">
    <location>
        <position position="313"/>
    </location>
    <ligand>
        <name>ATP</name>
        <dbReference type="ChEBI" id="CHEBI:30616"/>
    </ligand>
</feature>
<feature type="binding site" evidence="5 28">
    <location>
        <position position="338"/>
    </location>
    <ligand>
        <name>CDP</name>
        <dbReference type="ChEBI" id="CHEBI:58069"/>
    </ligand>
</feature>
<feature type="binding site" evidence="5 29">
    <location>
        <position position="340"/>
    </location>
    <ligand>
        <name>CDP</name>
        <dbReference type="ChEBI" id="CHEBI:58069"/>
    </ligand>
</feature>
<feature type="binding site" evidence="5 27">
    <location>
        <position position="343"/>
    </location>
    <ligand>
        <name>ADP</name>
        <dbReference type="ChEBI" id="CHEBI:456216"/>
    </ligand>
</feature>
<feature type="binding site" evidence="5 29">
    <location>
        <position position="343"/>
    </location>
    <ligand>
        <name>CDP</name>
        <dbReference type="ChEBI" id="CHEBI:58069"/>
    </ligand>
</feature>
<feature type="binding site" evidence="2">
    <location>
        <position position="344"/>
    </location>
    <ligand>
        <name>AMP</name>
        <dbReference type="ChEBI" id="CHEBI:456215"/>
    </ligand>
</feature>
<feature type="binding site" evidence="2">
    <location>
        <position position="344"/>
    </location>
    <ligand>
        <name>ATP</name>
        <dbReference type="ChEBI" id="CHEBI:30616"/>
    </ligand>
</feature>
<feature type="binding site" evidence="2">
    <location>
        <position position="375"/>
    </location>
    <ligand>
        <name>ATP</name>
        <dbReference type="ChEBI" id="CHEBI:30616"/>
    </ligand>
</feature>
<feature type="binding site" evidence="2">
    <location>
        <position position="375"/>
    </location>
    <ligand>
        <name>Mg(2+)</name>
        <dbReference type="ChEBI" id="CHEBI:18420"/>
    </ligand>
</feature>
<feature type="binding site" evidence="2">
    <location>
        <position position="376"/>
    </location>
    <ligand>
        <name>ATP</name>
        <dbReference type="ChEBI" id="CHEBI:30616"/>
    </ligand>
</feature>
<feature type="modified residue" description="N-acetylserine" evidence="35">
    <location>
        <position position="2"/>
    </location>
</feature>
<feature type="modified residue" description="Phosphoserine" evidence="36">
    <location>
        <position position="2"/>
    </location>
</feature>
<feature type="modified residue" description="Phosphoserine" evidence="36">
    <location>
        <position position="4"/>
    </location>
</feature>
<feature type="modified residue" description="N6-succinyllysine" evidence="1">
    <location>
        <position position="6"/>
    </location>
</feature>
<feature type="modified residue" description="N6-acetyllysine" evidence="32">
    <location>
        <position position="11"/>
    </location>
</feature>
<feature type="modified residue" description="N6-acetyllysine; alternate" evidence="32">
    <location>
        <position position="48"/>
    </location>
</feature>
<feature type="modified residue" description="N6-succinyllysine; alternate" evidence="1">
    <location>
        <position position="48"/>
    </location>
</feature>
<feature type="modified residue" description="N6-acetyllysine" evidence="32">
    <location>
        <position position="75"/>
    </location>
</feature>
<feature type="modified residue" description="Phosphotyrosine" evidence="1">
    <location>
        <position position="76"/>
    </location>
</feature>
<feature type="modified residue" description="N6-acetyllysine" evidence="32">
    <location>
        <position position="86"/>
    </location>
</feature>
<feature type="modified residue" description="N6-acetyllysine" evidence="1">
    <location>
        <position position="91"/>
    </location>
</feature>
<feature type="modified residue" description="N6-(2-hydroxyisobutyryl)lysine; alternate" evidence="12">
    <location>
        <position position="97"/>
    </location>
</feature>
<feature type="modified residue" description="N6-acetyllysine; alternate" evidence="32">
    <location>
        <position position="97"/>
    </location>
</feature>
<feature type="modified residue" description="N6-acetyllysine; alternate" evidence="32">
    <location>
        <position position="131"/>
    </location>
</feature>
<feature type="modified residue" description="N6-malonyllysine; alternate" evidence="7">
    <location>
        <position position="131"/>
    </location>
</feature>
<feature type="modified residue" description="N6-acetyllysine" evidence="32">
    <location>
        <position position="146"/>
    </location>
</feature>
<feature type="modified residue" description="N6-succinyllysine" evidence="1">
    <location>
        <position position="191"/>
    </location>
</feature>
<feature type="modified residue" description="Phosphotyrosine" evidence="30">
    <location>
        <position position="196"/>
    </location>
</feature>
<feature type="modified residue" description="N6-acetyllysine" evidence="32">
    <location>
        <position position="199"/>
    </location>
</feature>
<feature type="modified residue" description="Phosphoserine; by MAPK1" evidence="10 31 33 34 36 37">
    <location>
        <position position="203"/>
    </location>
</feature>
<feature type="modified residue" description="N6-(2-hydroxyisobutyryl)lysine" evidence="12">
    <location>
        <position position="216"/>
    </location>
</feature>
<feature type="modified residue" description="N6-(2-hydroxyisobutyryl)lysine" evidence="11">
    <location>
        <position position="220"/>
    </location>
</feature>
<feature type="modified residue" description="N6-acetyllysine" evidence="32">
    <location>
        <position position="267"/>
    </location>
</feature>
<feature type="modified residue" description="N6-acetyllysine" evidence="32">
    <location>
        <position position="291"/>
    </location>
</feature>
<feature type="modified residue" description="N6-(2-hydroxyisobutyryl)lysine" evidence="12">
    <location>
        <position position="323"/>
    </location>
</feature>
<feature type="modified residue" description="N6-acetyllysine" evidence="1">
    <location>
        <position position="361"/>
    </location>
</feature>
<feature type="splice variant" id="VSP_056159" description="In isoform 2." evidence="24">
    <location>
        <begin position="1"/>
        <end position="28"/>
    </location>
</feature>
<feature type="sequence variant" id="VAR_006076" description="In PGK1D; with congenital non-spherocytic anemia; variant Matsue; dbSNP:rs137852531." evidence="6">
    <original>L</original>
    <variation>P</variation>
    <location>
        <position position="88"/>
    </location>
</feature>
<feature type="sequence variant" id="VAR_006077" description="In PGK1D; with chronic hemolytic anemia; variant Shizuoka; dbSNP:rs137852532." evidence="3">
    <original>G</original>
    <variation>V</variation>
    <location>
        <position position="158"/>
    </location>
</feature>
<feature type="sequence variant" id="VAR_006078" description="In PGK1D; with chronic hemolytic anemia and intellectual disability; variant Amiens; dbSNP:rs137852538." evidence="20">
    <original>D</original>
    <variation>V</variation>
    <location>
        <position position="164"/>
    </location>
</feature>
<feature type="sequence variant" id="VAR_006079" description="In PGK1D; with chronic hemolytic anemia; variant Alabama." evidence="22">
    <location>
        <position position="191"/>
    </location>
</feature>
<feature type="sequence variant" id="VAR_006080" description="In PGK1D; with chronic hemolytic anemia; variant Uppsala; dbSNP:rs137852529." evidence="15">
    <original>R</original>
    <variation>P</variation>
    <location>
        <position position="206"/>
    </location>
</feature>
<feature type="sequence variant" id="VAR_006081" description="In PGK1D; with chronic hemolytic anemia; variant Antwerp." evidence="21">
    <original>E</original>
    <variation>A</variation>
    <location>
        <position position="252"/>
    </location>
</feature>
<feature type="sequence variant" id="VAR_006082" description="In PGK1D; with chronic non-spherocytic hemolytic anemia; variant Tokyo; dbSNP:rs431905501." evidence="16">
    <original>V</original>
    <variation>M</variation>
    <location>
        <position position="266"/>
    </location>
</feature>
<feature type="sequence variant" id="VAR_006083" description="In Munchen; 21% of activity; dbSNP:rs137852528." evidence="18 19">
    <original>D</original>
    <variation>N</variation>
    <location>
        <position position="268"/>
    </location>
</feature>
<feature type="sequence variant" id="VAR_006084" description="In PGK1D; with chronic hemolytic anemia; variant Herlev; 50% of activity; dbSNP:rs137852535." evidence="23">
    <original>D</original>
    <variation>V</variation>
    <location>
        <position position="285"/>
    </location>
</feature>
<feature type="sequence variant" id="VAR_006085" description="In PGK1D; with rhabdomyolysis; variant Creteil; dbSNP:rs2149136994." evidence="20">
    <original>D</original>
    <variation>N</variation>
    <location>
        <position position="315"/>
    </location>
</feature>
<feature type="sequence variant" id="VAR_006086" description="In PGK1D; with chronic hemolytic anemia; variant Michigan; dbSNP:rs137852533." evidence="4">
    <original>C</original>
    <variation>R</variation>
    <location>
        <position position="316"/>
    </location>
</feature>
<feature type="sequence variant" id="VAR_006087" description="In dbSNP:rs137852530." evidence="19">
    <original>T</original>
    <variation>N</variation>
    <location>
        <position position="352"/>
    </location>
</feature>
<feature type="mutagenesis site" description="Loss of activity." evidence="10">
    <original>T</original>
    <variation>P</variation>
    <location>
        <position position="378"/>
    </location>
</feature>
<feature type="sequence conflict" description="In Ref. 12; AA sequence." evidence="25" ref="12">
    <location>
        <position position="39"/>
    </location>
</feature>
<feature type="sequence conflict" description="In Ref. 6; CAG32997." evidence="25" ref="6">
    <original>I</original>
    <variation>T</variation>
    <location>
        <position position="370"/>
    </location>
</feature>
<feature type="helix" evidence="42">
    <location>
        <begin position="3"/>
        <end position="5"/>
    </location>
</feature>
<feature type="helix" evidence="38">
    <location>
        <begin position="9"/>
        <end position="11"/>
    </location>
</feature>
<feature type="strand" evidence="38">
    <location>
        <begin position="18"/>
        <end position="22"/>
    </location>
</feature>
<feature type="strand" evidence="43">
    <location>
        <begin position="29"/>
        <end position="32"/>
    </location>
</feature>
<feature type="strand" evidence="38">
    <location>
        <begin position="33"/>
        <end position="35"/>
    </location>
</feature>
<feature type="helix" evidence="38">
    <location>
        <begin position="38"/>
        <end position="52"/>
    </location>
</feature>
<feature type="strand" evidence="38">
    <location>
        <begin position="56"/>
        <end position="61"/>
    </location>
</feature>
<feature type="helix" evidence="38">
    <location>
        <begin position="73"/>
        <end position="76"/>
    </location>
</feature>
<feature type="helix" evidence="38">
    <location>
        <begin position="79"/>
        <end position="89"/>
    </location>
</feature>
<feature type="strand" evidence="41">
    <location>
        <begin position="94"/>
        <end position="97"/>
    </location>
</feature>
<feature type="strand" evidence="38">
    <location>
        <begin position="99"/>
        <end position="101"/>
    </location>
</feature>
<feature type="helix" evidence="38">
    <location>
        <begin position="102"/>
        <end position="109"/>
    </location>
</feature>
<feature type="strand" evidence="38">
    <location>
        <begin position="115"/>
        <end position="118"/>
    </location>
</feature>
<feature type="helix" evidence="38">
    <location>
        <begin position="122"/>
        <end position="124"/>
    </location>
</feature>
<feature type="turn" evidence="38">
    <location>
        <begin position="126"/>
        <end position="130"/>
    </location>
</feature>
<feature type="strand" evidence="39">
    <location>
        <begin position="131"/>
        <end position="133"/>
    </location>
</feature>
<feature type="strand" evidence="40">
    <location>
        <begin position="135"/>
        <end position="137"/>
    </location>
</feature>
<feature type="strand" evidence="42">
    <location>
        <begin position="139"/>
        <end position="141"/>
    </location>
</feature>
<feature type="helix" evidence="38">
    <location>
        <begin position="144"/>
        <end position="156"/>
    </location>
</feature>
<feature type="strand" evidence="38">
    <location>
        <begin position="159"/>
        <end position="163"/>
    </location>
</feature>
<feature type="helix" evidence="38">
    <location>
        <begin position="166"/>
        <end position="168"/>
    </location>
</feature>
<feature type="helix" evidence="38">
    <location>
        <begin position="174"/>
        <end position="177"/>
    </location>
</feature>
<feature type="strand" evidence="38">
    <location>
        <begin position="184"/>
        <end position="186"/>
    </location>
</feature>
<feature type="helix" evidence="38">
    <location>
        <begin position="188"/>
        <end position="202"/>
    </location>
</feature>
<feature type="strand" evidence="38">
    <location>
        <begin position="206"/>
        <end position="212"/>
    </location>
</feature>
<feature type="helix" evidence="38">
    <location>
        <begin position="217"/>
        <end position="220"/>
    </location>
</feature>
<feature type="helix" evidence="38">
    <location>
        <begin position="221"/>
        <end position="223"/>
    </location>
</feature>
<feature type="helix" evidence="38">
    <location>
        <begin position="224"/>
        <end position="227"/>
    </location>
</feature>
<feature type="turn" evidence="38">
    <location>
        <begin position="228"/>
        <end position="230"/>
    </location>
</feature>
<feature type="strand" evidence="38">
    <location>
        <begin position="232"/>
        <end position="236"/>
    </location>
</feature>
<feature type="helix" evidence="38">
    <location>
        <begin position="238"/>
        <end position="240"/>
    </location>
</feature>
<feature type="helix" evidence="38">
    <location>
        <begin position="241"/>
        <end position="249"/>
    </location>
</feature>
<feature type="helix" evidence="38">
    <location>
        <begin position="260"/>
        <end position="263"/>
    </location>
</feature>
<feature type="helix" evidence="38">
    <location>
        <begin position="266"/>
        <end position="275"/>
    </location>
</feature>
<feature type="strand" evidence="38">
    <location>
        <begin position="279"/>
        <end position="281"/>
    </location>
</feature>
<feature type="strand" evidence="38">
    <location>
        <begin position="285"/>
        <end position="293"/>
    </location>
</feature>
<feature type="strand" evidence="38">
    <location>
        <begin position="298"/>
        <end position="302"/>
    </location>
</feature>
<feature type="turn" evidence="38">
    <location>
        <begin position="303"/>
        <end position="305"/>
    </location>
</feature>
<feature type="strand" evidence="38">
    <location>
        <begin position="312"/>
        <end position="316"/>
    </location>
</feature>
<feature type="helix" evidence="38">
    <location>
        <begin position="318"/>
        <end position="330"/>
    </location>
</feature>
<feature type="strand" evidence="38">
    <location>
        <begin position="332"/>
        <end position="338"/>
    </location>
</feature>
<feature type="helix" evidence="38">
    <location>
        <begin position="346"/>
        <end position="348"/>
    </location>
</feature>
<feature type="helix" evidence="38">
    <location>
        <begin position="350"/>
        <end position="364"/>
    </location>
</feature>
<feature type="strand" evidence="38">
    <location>
        <begin position="368"/>
        <end position="373"/>
    </location>
</feature>
<feature type="helix" evidence="38">
    <location>
        <begin position="376"/>
        <end position="382"/>
    </location>
</feature>
<feature type="strand" evidence="38">
    <location>
        <begin position="388"/>
        <end position="394"/>
    </location>
</feature>
<feature type="helix" evidence="38">
    <location>
        <begin position="397"/>
        <end position="404"/>
    </location>
</feature>
<feature type="helix" evidence="38">
    <location>
        <begin position="409"/>
        <end position="412"/>
    </location>
</feature>
<proteinExistence type="evidence at protein level"/>
<gene>
    <name type="primary">PGK1</name>
    <name type="synonym">PGKA</name>
    <name type="ORF">MIG10</name>
    <name type="ORF">OK/SW-cl.110</name>
</gene>
<name>PGK1_HUMAN</name>
<organism>
    <name type="scientific">Homo sapiens</name>
    <name type="common">Human</name>
    <dbReference type="NCBI Taxonomy" id="9606"/>
    <lineage>
        <taxon>Eukaryota</taxon>
        <taxon>Metazoa</taxon>
        <taxon>Chordata</taxon>
        <taxon>Craniata</taxon>
        <taxon>Vertebrata</taxon>
        <taxon>Euteleostomi</taxon>
        <taxon>Mammalia</taxon>
        <taxon>Eutheria</taxon>
        <taxon>Euarchontoglires</taxon>
        <taxon>Primates</taxon>
        <taxon>Haplorrhini</taxon>
        <taxon>Catarrhini</taxon>
        <taxon>Hominidae</taxon>
        <taxon>Homo</taxon>
    </lineage>
</organism>
<protein>
    <recommendedName>
        <fullName>Phosphoglycerate kinase 1</fullName>
        <ecNumber evidence="10">2.7.11.1</ecNumber>
        <ecNumber evidence="13">2.7.2.3</ecNumber>
    </recommendedName>
    <alternativeName>
        <fullName>Cell migration-inducing gene 10 protein</fullName>
    </alternativeName>
    <alternativeName>
        <fullName>Primer recognition protein 2</fullName>
        <shortName>PRP 2</shortName>
    </alternativeName>
</protein>
<comment type="function">
    <text evidence="5 8 9 10 13 14 18">Catalyzes one of the two ATP producing reactions in the glycolytic pathway via the reversible conversion of 1,3-diphosphoglycerate to 3-phosphoglycerate (PubMed:30323285, PubMed:7391028). Both L- and D- forms of purine and pyrimidine nucleotides can be used as substrates, but the activity is much lower on pyrimidines (PubMed:18463139). In addition to its role as a glycolytic enzyme, it seems that PGK1 acts as a polymerase alpha cofactor protein (primer recognition protein) (PubMed:2324090). Acts as a protein kinase when localized to the mitochondrion where it phosphorylates pyruvate dehydrogenase kinase PDK1 to inhibit pyruvate dehydrogenase complex activity and suppress the formation of acetyl-coenzyme A from pyruvate, and consequently inhibit oxidative phosphorylation and promote glycolysis (PubMed:26942675, PubMed:36849569). May play a role in sperm motility (PubMed:26677959).</text>
</comment>
<comment type="catalytic activity">
    <reaction evidence="13 18">
        <text>(2R)-3-phosphoglycerate + ATP = (2R)-3-phospho-glyceroyl phosphate + ADP</text>
        <dbReference type="Rhea" id="RHEA:14801"/>
        <dbReference type="ChEBI" id="CHEBI:30616"/>
        <dbReference type="ChEBI" id="CHEBI:57604"/>
        <dbReference type="ChEBI" id="CHEBI:58272"/>
        <dbReference type="ChEBI" id="CHEBI:456216"/>
        <dbReference type="EC" id="2.7.2.3"/>
    </reaction>
</comment>
<comment type="catalytic activity">
    <reaction evidence="10">
        <text>L-seryl-[protein] + ATP = O-phospho-L-seryl-[protein] + ADP + H(+)</text>
        <dbReference type="Rhea" id="RHEA:17989"/>
        <dbReference type="Rhea" id="RHEA-COMP:9863"/>
        <dbReference type="Rhea" id="RHEA-COMP:11604"/>
        <dbReference type="ChEBI" id="CHEBI:15378"/>
        <dbReference type="ChEBI" id="CHEBI:29999"/>
        <dbReference type="ChEBI" id="CHEBI:30616"/>
        <dbReference type="ChEBI" id="CHEBI:83421"/>
        <dbReference type="ChEBI" id="CHEBI:456216"/>
        <dbReference type="EC" id="2.7.11.1"/>
    </reaction>
</comment>
<comment type="cofactor">
    <cofactor evidence="5">
        <name>Mg(2+)</name>
        <dbReference type="ChEBI" id="CHEBI:18420"/>
    </cofactor>
</comment>
<comment type="activity regulation">
    <text evidence="13">Specifically inhibited by heterocyclic compound CBR-470-0.</text>
</comment>
<comment type="biophysicochemical properties">
    <kinetics>
        <KM evidence="10">0.56 mM for ATP</KM>
    </kinetics>
</comment>
<comment type="pathway">
    <text evidence="13 18">Carbohydrate degradation; glycolysis; pyruvate from D-glyceraldehyde 3-phosphate: step 2/5.</text>
</comment>
<comment type="subunit">
    <text evidence="5 10 14">Monomer (PubMed:18463139). Interacts with kinase MAPK1/ERK2; the interaction is direct, occurs under hypoxic conditions, and promotes its interaction with PIN1 (PubMed:26942675). Interacts with peptidyl-prolyl cis-trans isomerase PIN1; the interaction is direct, occurs under hypoxic conditions, and targets the protein to the mitochondrion by promoting interactions with the TOM complex (PubMed:26942675). Interacts with mitochondrial circRNA mcPGK1 (via its 2nd stem-loop); the interaction is direct and targets the protein to the mitochondrion by promoting interactions with the TOM complex (PubMed:36849569). Interacts with pyruvate dehydrogenase kinase PDK1; the interaction is direct, occurs under hypoxic conditions and leads to PDK1-mediated inhibition of pyruvate dehydrogenase complex activity (PubMed:26942675).</text>
</comment>
<comment type="interaction">
    <interactant intactId="EBI-709599">
        <id>P00558</id>
    </interactant>
    <interactant intactId="EBI-354056">
        <id>P04406</id>
        <label>GAPDH</label>
    </interactant>
    <organismsDiffer>false</organismsDiffer>
    <experiments>2</experiments>
</comment>
<comment type="interaction">
    <interactant intactId="EBI-709599">
        <id>P00558</id>
    </interactant>
    <interactant intactId="EBI-607682">
        <id>O15379</id>
        <label>HDAC3</label>
    </interactant>
    <organismsDiffer>false</organismsDiffer>
    <experiments>2</experiments>
</comment>
<comment type="interaction">
    <interactant intactId="EBI-709599">
        <id>P00558</id>
    </interactant>
    <interactant intactId="EBI-1055945">
        <id>Q8TDX7</id>
        <label>NEK7</label>
    </interactant>
    <organismsDiffer>false</organismsDiffer>
    <experiments>2</experiments>
</comment>
<comment type="interaction">
    <interactant intactId="EBI-709599">
        <id>P00558</id>
    </interactant>
    <interactant intactId="EBI-358311">
        <id>P12004</id>
        <label>PCNA</label>
    </interactant>
    <organismsDiffer>false</organismsDiffer>
    <experiments>2</experiments>
</comment>
<comment type="interaction">
    <interactant intactId="EBI-709599">
        <id>P00558</id>
    </interactant>
    <interactant intactId="EBI-21572584">
        <id>P07205</id>
        <label>PGK2</label>
    </interactant>
    <organismsDiffer>false</organismsDiffer>
    <experiments>4</experiments>
</comment>
<comment type="interaction">
    <interactant intactId="EBI-16177310">
        <id>P00558-1</id>
    </interactant>
    <interactant intactId="EBI-607682">
        <id>O15379</id>
        <label>HDAC3</label>
    </interactant>
    <organismsDiffer>false</organismsDiffer>
    <experiments>3</experiments>
</comment>
<comment type="subcellular location">
    <subcellularLocation>
        <location evidence="14">Cytoplasm</location>
        <location evidence="14">Cytosol</location>
    </subcellularLocation>
    <subcellularLocation>
        <location evidence="10 14">Mitochondrion matrix</location>
    </subcellularLocation>
    <text evidence="10 14">Hypoxic conditions promote mitochondrial targeting (PubMed:26942675). Targeted to the mitochondrion following phosphorylation by MAPK1/ERK2, cis-trans isomerization by PIN1, and binding to mitochondrial circRNA mcPGK1 (PubMed:36849569).</text>
</comment>
<comment type="alternative products">
    <event type="alternative splicing"/>
    <isoform>
        <id>P00558-1</id>
        <name>1</name>
        <sequence type="displayed"/>
    </isoform>
    <isoform>
        <id>P00558-2</id>
        <name>2</name>
        <sequence type="described" ref="VSP_056159"/>
    </isoform>
</comment>
<comment type="tissue specificity">
    <text evidence="9">Mainly expressed in spermatogonia. Localized on the principle piece in the sperm (at protein level). Expression significantly decreased in the testis of elderly men.</text>
</comment>
<comment type="PTM">
    <text evidence="10">Phosphorylated at Ser-203 by MAPK1/ERK2 under hypoxic conditions, which promotes its mitochondrial targeting.</text>
</comment>
<comment type="disease" evidence="3 4 6 15 16 20 21 22 23">
    <disease id="DI-02753">
        <name>Phosphoglycerate kinase 1 deficiency</name>
        <acronym>PGK1D</acronym>
        <description>A condition with a highly variable clinical phenotype that includes hemolytic anemia, rhabdomyolysis, myopathy and neurologic involvement. Patients can express one or more of these manifestations, and some affected individuals develop parkinsonian symptoms.</description>
        <dbReference type="MIM" id="300653"/>
    </disease>
    <text>The disease is caused by variants affecting the gene represented in this entry.</text>
</comment>
<comment type="miscellaneous">
    <text evidence="10 14">Dysregulated mitochondrial targeting of PGK1 may contribute to the elevation of aerobic glycolysis seen in tumor cells, a phenomenon known as the Warburg effect.</text>
</comment>
<comment type="similarity">
    <text evidence="25">Belongs to the phosphoglycerate kinase family.</text>
</comment>
<comment type="online information" name="Wikipedia">
    <link uri="https://en.wikipedia.org/wiki/Phosphoglycerate_kinase"/>
    <text>Phosphoglycerate kinase entry</text>
</comment>
<sequence length="417" mass="44615">MSLSNKLTLDKLDVKGKRVVMRVDFNVPMKNNQITNNQRIKAAVPSIKFCLDNGAKSVVLMSHLGRPDGVPMPDKYSLEPVAVELKSLLGKDVLFLKDCVGPEVEKACANPAAGSVILLENLRFHVEEEGKGKDASGNKVKAEPAKIEAFRASLSKLGDVYVNDAFGTAHRAHSSMVGVNLPQKAGGFLMKKELNYFAKALESPERPFLAILGGAKVADKIQLINNMLDKVNEMIIGGGMAFTFLKVLNNMEIGTSLFDEEGAKIVKDLMSKAEKNGVKITLPVDFVTADKFDENAKTGQATVASGIPAGWMGLDCGPESSKKYAEAVTRAKQIVWNGPVGVFEWEAFARGTKALMDEVVKATSRGCITIIGGGDTATCCAKWNTEDKVSHVSTGGGASLELLEGKVLPGVDALSNI</sequence>
<keyword id="KW-0002">3D-structure</keyword>
<keyword id="KW-0007">Acetylation</keyword>
<keyword id="KW-0025">Alternative splicing</keyword>
<keyword id="KW-0067">ATP-binding</keyword>
<keyword id="KW-0963">Cytoplasm</keyword>
<keyword id="KW-0903">Direct protein sequencing</keyword>
<keyword id="KW-0225">Disease variant</keyword>
<keyword id="KW-0324">Glycolysis</keyword>
<keyword id="KW-0360">Hereditary hemolytic anemia</keyword>
<keyword id="KW-0379">Hydroxylation</keyword>
<keyword id="KW-0418">Kinase</keyword>
<keyword id="KW-0460">Magnesium</keyword>
<keyword id="KW-0479">Metal-binding</keyword>
<keyword id="KW-0496">Mitochondrion</keyword>
<keyword id="KW-0547">Nucleotide-binding</keyword>
<keyword id="KW-0597">Phosphoprotein</keyword>
<keyword id="KW-1267">Proteomics identification</keyword>
<keyword id="KW-1185">Reference proteome</keyword>
<keyword id="KW-0808">Transferase</keyword>
<accession>P00558</accession>
<accession>A8K4W6</accession>
<accession>B7Z7A9</accession>
<accession>Q5J7W1</accession>
<accession>Q6IBT6</accession>
<accession>Q8NI87</accession>
<reference key="1">
    <citation type="journal article" date="1983" name="Proc. Natl. Acad. Sci. U.S.A.">
        <title>Isolation and DNA sequence of a full-length cDNA clone for human X chromosome-encoded phosphoglycerate kinase.</title>
        <authorList>
            <person name="Michelson A.M."/>
            <person name="Markham A.F."/>
            <person name="Orkin S.H."/>
        </authorList>
    </citation>
    <scope>NUCLEOTIDE SEQUENCE [MRNA] (ISOFORM 1)</scope>
    <source>
        <tissue>Liver</tissue>
    </source>
</reference>
<reference key="2">
    <citation type="journal article" date="1985" name="Proc. Natl. Acad. Sci. U.S.A.">
        <title>Structure of the human phosphoglycerate kinase gene and the intron-mediated evolution and dispersal of the nucleotide-binding domain.</title>
        <authorList>
            <person name="Michelson A.M."/>
            <person name="Blake C.C."/>
            <person name="Evans S.T."/>
            <person name="Orkin S.H."/>
        </authorList>
    </citation>
    <scope>NUCLEOTIDE SEQUENCE [GENOMIC DNA]</scope>
</reference>
<reference key="3">
    <citation type="submission" date="2003-09" db="EMBL/GenBank/DDBJ databases">
        <title>Identification of a human migration-inducing gene 10 (MIG10).</title>
        <authorList>
            <person name="Kim J.W."/>
        </authorList>
    </citation>
    <scope>NUCLEOTIDE SEQUENCE [LARGE SCALE MRNA] (ISOFORM 1)</scope>
</reference>
<reference key="4">
    <citation type="submission" date="2001-05" db="EMBL/GenBank/DDBJ databases">
        <title>Identification of immuno-peptidmics that are recognized by tumor-reactive CTL generated from TIL of colon cancer patients.</title>
        <authorList>
            <person name="Shichijo S."/>
            <person name="Itoh K."/>
        </authorList>
    </citation>
    <scope>NUCLEOTIDE SEQUENCE [LARGE SCALE MRNA] (ISOFORM 1)</scope>
    <source>
        <tissue>Colon adenocarcinoma</tissue>
    </source>
</reference>
<reference key="5">
    <citation type="journal article" date="2004" name="Nat. Genet.">
        <title>Complete sequencing and characterization of 21,243 full-length human cDNAs.</title>
        <authorList>
            <person name="Ota T."/>
            <person name="Suzuki Y."/>
            <person name="Nishikawa T."/>
            <person name="Otsuki T."/>
            <person name="Sugiyama T."/>
            <person name="Irie R."/>
            <person name="Wakamatsu A."/>
            <person name="Hayashi K."/>
            <person name="Sato H."/>
            <person name="Nagai K."/>
            <person name="Kimura K."/>
            <person name="Makita H."/>
            <person name="Sekine M."/>
            <person name="Obayashi M."/>
            <person name="Nishi T."/>
            <person name="Shibahara T."/>
            <person name="Tanaka T."/>
            <person name="Ishii S."/>
            <person name="Yamamoto J."/>
            <person name="Saito K."/>
            <person name="Kawai Y."/>
            <person name="Isono Y."/>
            <person name="Nakamura Y."/>
            <person name="Nagahari K."/>
            <person name="Murakami K."/>
            <person name="Yasuda T."/>
            <person name="Iwayanagi T."/>
            <person name="Wagatsuma M."/>
            <person name="Shiratori A."/>
            <person name="Sudo H."/>
            <person name="Hosoiri T."/>
            <person name="Kaku Y."/>
            <person name="Kodaira H."/>
            <person name="Kondo H."/>
            <person name="Sugawara M."/>
            <person name="Takahashi M."/>
            <person name="Kanda K."/>
            <person name="Yokoi T."/>
            <person name="Furuya T."/>
            <person name="Kikkawa E."/>
            <person name="Omura Y."/>
            <person name="Abe K."/>
            <person name="Kamihara K."/>
            <person name="Katsuta N."/>
            <person name="Sato K."/>
            <person name="Tanikawa M."/>
            <person name="Yamazaki M."/>
            <person name="Ninomiya K."/>
            <person name="Ishibashi T."/>
            <person name="Yamashita H."/>
            <person name="Murakawa K."/>
            <person name="Fujimori K."/>
            <person name="Tanai H."/>
            <person name="Kimata M."/>
            <person name="Watanabe M."/>
            <person name="Hiraoka S."/>
            <person name="Chiba Y."/>
            <person name="Ishida S."/>
            <person name="Ono Y."/>
            <person name="Takiguchi S."/>
            <person name="Watanabe S."/>
            <person name="Yosida M."/>
            <person name="Hotuta T."/>
            <person name="Kusano J."/>
            <person name="Kanehori K."/>
            <person name="Takahashi-Fujii A."/>
            <person name="Hara H."/>
            <person name="Tanase T.-O."/>
            <person name="Nomura Y."/>
            <person name="Togiya S."/>
            <person name="Komai F."/>
            <person name="Hara R."/>
            <person name="Takeuchi K."/>
            <person name="Arita M."/>
            <person name="Imose N."/>
            <person name="Musashino K."/>
            <person name="Yuuki H."/>
            <person name="Oshima A."/>
            <person name="Sasaki N."/>
            <person name="Aotsuka S."/>
            <person name="Yoshikawa Y."/>
            <person name="Matsunawa H."/>
            <person name="Ichihara T."/>
            <person name="Shiohata N."/>
            <person name="Sano S."/>
            <person name="Moriya S."/>
            <person name="Momiyama H."/>
            <person name="Satoh N."/>
            <person name="Takami S."/>
            <person name="Terashima Y."/>
            <person name="Suzuki O."/>
            <person name="Nakagawa S."/>
            <person name="Senoh A."/>
            <person name="Mizoguchi H."/>
            <person name="Goto Y."/>
            <person name="Shimizu F."/>
            <person name="Wakebe H."/>
            <person name="Hishigaki H."/>
            <person name="Watanabe T."/>
            <person name="Sugiyama A."/>
            <person name="Takemoto M."/>
            <person name="Kawakami B."/>
            <person name="Yamazaki M."/>
            <person name="Watanabe K."/>
            <person name="Kumagai A."/>
            <person name="Itakura S."/>
            <person name="Fukuzumi Y."/>
            <person name="Fujimori Y."/>
            <person name="Komiyama M."/>
            <person name="Tashiro H."/>
            <person name="Tanigami A."/>
            <person name="Fujiwara T."/>
            <person name="Ono T."/>
            <person name="Yamada K."/>
            <person name="Fujii Y."/>
            <person name="Ozaki K."/>
            <person name="Hirao M."/>
            <person name="Ohmori Y."/>
            <person name="Kawabata A."/>
            <person name="Hikiji T."/>
            <person name="Kobatake N."/>
            <person name="Inagaki H."/>
            <person name="Ikema Y."/>
            <person name="Okamoto S."/>
            <person name="Okitani R."/>
            <person name="Kawakami T."/>
            <person name="Noguchi S."/>
            <person name="Itoh T."/>
            <person name="Shigeta K."/>
            <person name="Senba T."/>
            <person name="Matsumura K."/>
            <person name="Nakajima Y."/>
            <person name="Mizuno T."/>
            <person name="Morinaga M."/>
            <person name="Sasaki M."/>
            <person name="Togashi T."/>
            <person name="Oyama M."/>
            <person name="Hata H."/>
            <person name="Watanabe M."/>
            <person name="Komatsu T."/>
            <person name="Mizushima-Sugano J."/>
            <person name="Satoh T."/>
            <person name="Shirai Y."/>
            <person name="Takahashi Y."/>
            <person name="Nakagawa K."/>
            <person name="Okumura K."/>
            <person name="Nagase T."/>
            <person name="Nomura N."/>
            <person name="Kikuchi H."/>
            <person name="Masuho Y."/>
            <person name="Yamashita R."/>
            <person name="Nakai K."/>
            <person name="Yada T."/>
            <person name="Nakamura Y."/>
            <person name="Ohara O."/>
            <person name="Isogai T."/>
            <person name="Sugano S."/>
        </authorList>
    </citation>
    <scope>NUCLEOTIDE SEQUENCE [LARGE SCALE MRNA] (ISOFORMS 1 AND 2)</scope>
    <source>
        <tissue>Cerebellum</tissue>
        <tissue>Testis</tissue>
    </source>
</reference>
<reference key="6">
    <citation type="submission" date="2004-06" db="EMBL/GenBank/DDBJ databases">
        <title>Cloning of human full open reading frames in Gateway(TM) system entry vector (pDONR201).</title>
        <authorList>
            <person name="Ebert L."/>
            <person name="Schick M."/>
            <person name="Neubert P."/>
            <person name="Schatten R."/>
            <person name="Henze S."/>
            <person name="Korn B."/>
        </authorList>
    </citation>
    <scope>NUCLEOTIDE SEQUENCE [LARGE SCALE MRNA] (ISOFORM 1)</scope>
</reference>
<reference key="7">
    <citation type="journal article" date="2005" name="Nature">
        <title>The DNA sequence of the human X chromosome.</title>
        <authorList>
            <person name="Ross M.T."/>
            <person name="Grafham D.V."/>
            <person name="Coffey A.J."/>
            <person name="Scherer S."/>
            <person name="McLay K."/>
            <person name="Muzny D."/>
            <person name="Platzer M."/>
            <person name="Howell G.R."/>
            <person name="Burrows C."/>
            <person name="Bird C.P."/>
            <person name="Frankish A."/>
            <person name="Lovell F.L."/>
            <person name="Howe K.L."/>
            <person name="Ashurst J.L."/>
            <person name="Fulton R.S."/>
            <person name="Sudbrak R."/>
            <person name="Wen G."/>
            <person name="Jones M.C."/>
            <person name="Hurles M.E."/>
            <person name="Andrews T.D."/>
            <person name="Scott C.E."/>
            <person name="Searle S."/>
            <person name="Ramser J."/>
            <person name="Whittaker A."/>
            <person name="Deadman R."/>
            <person name="Carter N.P."/>
            <person name="Hunt S.E."/>
            <person name="Chen R."/>
            <person name="Cree A."/>
            <person name="Gunaratne P."/>
            <person name="Havlak P."/>
            <person name="Hodgson A."/>
            <person name="Metzker M.L."/>
            <person name="Richards S."/>
            <person name="Scott G."/>
            <person name="Steffen D."/>
            <person name="Sodergren E."/>
            <person name="Wheeler D.A."/>
            <person name="Worley K.C."/>
            <person name="Ainscough R."/>
            <person name="Ambrose K.D."/>
            <person name="Ansari-Lari M.A."/>
            <person name="Aradhya S."/>
            <person name="Ashwell R.I."/>
            <person name="Babbage A.K."/>
            <person name="Bagguley C.L."/>
            <person name="Ballabio A."/>
            <person name="Banerjee R."/>
            <person name="Barker G.E."/>
            <person name="Barlow K.F."/>
            <person name="Barrett I.P."/>
            <person name="Bates K.N."/>
            <person name="Beare D.M."/>
            <person name="Beasley H."/>
            <person name="Beasley O."/>
            <person name="Beck A."/>
            <person name="Bethel G."/>
            <person name="Blechschmidt K."/>
            <person name="Brady N."/>
            <person name="Bray-Allen S."/>
            <person name="Bridgeman A.M."/>
            <person name="Brown A.J."/>
            <person name="Brown M.J."/>
            <person name="Bonnin D."/>
            <person name="Bruford E.A."/>
            <person name="Buhay C."/>
            <person name="Burch P."/>
            <person name="Burford D."/>
            <person name="Burgess J."/>
            <person name="Burrill W."/>
            <person name="Burton J."/>
            <person name="Bye J.M."/>
            <person name="Carder C."/>
            <person name="Carrel L."/>
            <person name="Chako J."/>
            <person name="Chapman J.C."/>
            <person name="Chavez D."/>
            <person name="Chen E."/>
            <person name="Chen G."/>
            <person name="Chen Y."/>
            <person name="Chen Z."/>
            <person name="Chinault C."/>
            <person name="Ciccodicola A."/>
            <person name="Clark S.Y."/>
            <person name="Clarke G."/>
            <person name="Clee C.M."/>
            <person name="Clegg S."/>
            <person name="Clerc-Blankenburg K."/>
            <person name="Clifford K."/>
            <person name="Cobley V."/>
            <person name="Cole C.G."/>
            <person name="Conquer J.S."/>
            <person name="Corby N."/>
            <person name="Connor R.E."/>
            <person name="David R."/>
            <person name="Davies J."/>
            <person name="Davis C."/>
            <person name="Davis J."/>
            <person name="Delgado O."/>
            <person name="Deshazo D."/>
            <person name="Dhami P."/>
            <person name="Ding Y."/>
            <person name="Dinh H."/>
            <person name="Dodsworth S."/>
            <person name="Draper H."/>
            <person name="Dugan-Rocha S."/>
            <person name="Dunham A."/>
            <person name="Dunn M."/>
            <person name="Durbin K.J."/>
            <person name="Dutta I."/>
            <person name="Eades T."/>
            <person name="Ellwood M."/>
            <person name="Emery-Cohen A."/>
            <person name="Errington H."/>
            <person name="Evans K.L."/>
            <person name="Faulkner L."/>
            <person name="Francis F."/>
            <person name="Frankland J."/>
            <person name="Fraser A.E."/>
            <person name="Galgoczy P."/>
            <person name="Gilbert J."/>
            <person name="Gill R."/>
            <person name="Gloeckner G."/>
            <person name="Gregory S.G."/>
            <person name="Gribble S."/>
            <person name="Griffiths C."/>
            <person name="Grocock R."/>
            <person name="Gu Y."/>
            <person name="Gwilliam R."/>
            <person name="Hamilton C."/>
            <person name="Hart E.A."/>
            <person name="Hawes A."/>
            <person name="Heath P.D."/>
            <person name="Heitmann K."/>
            <person name="Hennig S."/>
            <person name="Hernandez J."/>
            <person name="Hinzmann B."/>
            <person name="Ho S."/>
            <person name="Hoffs M."/>
            <person name="Howden P.J."/>
            <person name="Huckle E.J."/>
            <person name="Hume J."/>
            <person name="Hunt P.J."/>
            <person name="Hunt A.R."/>
            <person name="Isherwood J."/>
            <person name="Jacob L."/>
            <person name="Johnson D."/>
            <person name="Jones S."/>
            <person name="de Jong P.J."/>
            <person name="Joseph S.S."/>
            <person name="Keenan S."/>
            <person name="Kelly S."/>
            <person name="Kershaw J.K."/>
            <person name="Khan Z."/>
            <person name="Kioschis P."/>
            <person name="Klages S."/>
            <person name="Knights A.J."/>
            <person name="Kosiura A."/>
            <person name="Kovar-Smith C."/>
            <person name="Laird G.K."/>
            <person name="Langford C."/>
            <person name="Lawlor S."/>
            <person name="Leversha M."/>
            <person name="Lewis L."/>
            <person name="Liu W."/>
            <person name="Lloyd C."/>
            <person name="Lloyd D.M."/>
            <person name="Loulseged H."/>
            <person name="Loveland J.E."/>
            <person name="Lovell J.D."/>
            <person name="Lozado R."/>
            <person name="Lu J."/>
            <person name="Lyne R."/>
            <person name="Ma J."/>
            <person name="Maheshwari M."/>
            <person name="Matthews L.H."/>
            <person name="McDowall J."/>
            <person name="McLaren S."/>
            <person name="McMurray A."/>
            <person name="Meidl P."/>
            <person name="Meitinger T."/>
            <person name="Milne S."/>
            <person name="Miner G."/>
            <person name="Mistry S.L."/>
            <person name="Morgan M."/>
            <person name="Morris S."/>
            <person name="Mueller I."/>
            <person name="Mullikin J.C."/>
            <person name="Nguyen N."/>
            <person name="Nordsiek G."/>
            <person name="Nyakatura G."/>
            <person name="O'dell C.N."/>
            <person name="Okwuonu G."/>
            <person name="Palmer S."/>
            <person name="Pandian R."/>
            <person name="Parker D."/>
            <person name="Parrish J."/>
            <person name="Pasternak S."/>
            <person name="Patel D."/>
            <person name="Pearce A.V."/>
            <person name="Pearson D.M."/>
            <person name="Pelan S.E."/>
            <person name="Perez L."/>
            <person name="Porter K.M."/>
            <person name="Ramsey Y."/>
            <person name="Reichwald K."/>
            <person name="Rhodes S."/>
            <person name="Ridler K.A."/>
            <person name="Schlessinger D."/>
            <person name="Schueler M.G."/>
            <person name="Sehra H.K."/>
            <person name="Shaw-Smith C."/>
            <person name="Shen H."/>
            <person name="Sheridan E.M."/>
            <person name="Shownkeen R."/>
            <person name="Skuce C.D."/>
            <person name="Smith M.L."/>
            <person name="Sotheran E.C."/>
            <person name="Steingruber H.E."/>
            <person name="Steward C.A."/>
            <person name="Storey R."/>
            <person name="Swann R.M."/>
            <person name="Swarbreck D."/>
            <person name="Tabor P.E."/>
            <person name="Taudien S."/>
            <person name="Taylor T."/>
            <person name="Teague B."/>
            <person name="Thomas K."/>
            <person name="Thorpe A."/>
            <person name="Timms K."/>
            <person name="Tracey A."/>
            <person name="Trevanion S."/>
            <person name="Tromans A.C."/>
            <person name="d'Urso M."/>
            <person name="Verduzco D."/>
            <person name="Villasana D."/>
            <person name="Waldron L."/>
            <person name="Wall M."/>
            <person name="Wang Q."/>
            <person name="Warren J."/>
            <person name="Warry G.L."/>
            <person name="Wei X."/>
            <person name="West A."/>
            <person name="Whitehead S.L."/>
            <person name="Whiteley M.N."/>
            <person name="Wilkinson J.E."/>
            <person name="Willey D.L."/>
            <person name="Williams G."/>
            <person name="Williams L."/>
            <person name="Williamson A."/>
            <person name="Williamson H."/>
            <person name="Wilming L."/>
            <person name="Woodmansey R.L."/>
            <person name="Wray P.W."/>
            <person name="Yen J."/>
            <person name="Zhang J."/>
            <person name="Zhou J."/>
            <person name="Zoghbi H."/>
            <person name="Zorilla S."/>
            <person name="Buck D."/>
            <person name="Reinhardt R."/>
            <person name="Poustka A."/>
            <person name="Rosenthal A."/>
            <person name="Lehrach H."/>
            <person name="Meindl A."/>
            <person name="Minx P.J."/>
            <person name="Hillier L.W."/>
            <person name="Willard H.F."/>
            <person name="Wilson R.K."/>
            <person name="Waterston R.H."/>
            <person name="Rice C.M."/>
            <person name="Vaudin M."/>
            <person name="Coulson A."/>
            <person name="Nelson D.L."/>
            <person name="Weinstock G."/>
            <person name="Sulston J.E."/>
            <person name="Durbin R.M."/>
            <person name="Hubbard T."/>
            <person name="Gibbs R.A."/>
            <person name="Beck S."/>
            <person name="Rogers J."/>
            <person name="Bentley D.R."/>
        </authorList>
    </citation>
    <scope>NUCLEOTIDE SEQUENCE [LARGE SCALE GENOMIC DNA]</scope>
</reference>
<reference key="8">
    <citation type="submission" date="2005-09" db="EMBL/GenBank/DDBJ databases">
        <authorList>
            <person name="Mural R.J."/>
            <person name="Istrail S."/>
            <person name="Sutton G."/>
            <person name="Florea L."/>
            <person name="Halpern A.L."/>
            <person name="Mobarry C.M."/>
            <person name="Lippert R."/>
            <person name="Walenz B."/>
            <person name="Shatkay H."/>
            <person name="Dew I."/>
            <person name="Miller J.R."/>
            <person name="Flanigan M.J."/>
            <person name="Edwards N.J."/>
            <person name="Bolanos R."/>
            <person name="Fasulo D."/>
            <person name="Halldorsson B.V."/>
            <person name="Hannenhalli S."/>
            <person name="Turner R."/>
            <person name="Yooseph S."/>
            <person name="Lu F."/>
            <person name="Nusskern D.R."/>
            <person name="Shue B.C."/>
            <person name="Zheng X.H."/>
            <person name="Zhong F."/>
            <person name="Delcher A.L."/>
            <person name="Huson D.H."/>
            <person name="Kravitz S.A."/>
            <person name="Mouchard L."/>
            <person name="Reinert K."/>
            <person name="Remington K.A."/>
            <person name="Clark A.G."/>
            <person name="Waterman M.S."/>
            <person name="Eichler E.E."/>
            <person name="Adams M.D."/>
            <person name="Hunkapiller M.W."/>
            <person name="Myers E.W."/>
            <person name="Venter J.C."/>
        </authorList>
    </citation>
    <scope>NUCLEOTIDE SEQUENCE [LARGE SCALE GENOMIC DNA]</scope>
</reference>
<reference key="9">
    <citation type="journal article" date="2004" name="Genome Res.">
        <title>The status, quality, and expansion of the NIH full-length cDNA project: the Mammalian Gene Collection (MGC).</title>
        <authorList>
            <consortium name="The MGC Project Team"/>
        </authorList>
    </citation>
    <scope>NUCLEOTIDE SEQUENCE [LARGE SCALE MRNA] (ISOFORM 1)</scope>
    <source>
        <tissue>Brain</tissue>
        <tissue>Skin</tissue>
        <tissue>Uterus</tissue>
    </source>
</reference>
<reference key="10">
    <citation type="journal article" date="1984" name="Gene">
        <title>Sequence of the promoter region of the gene for human X-linked 3-phosphoglycerate kinase].</title>
        <authorList>
            <person name="Singer-Sam J."/>
            <person name="Keith D.H."/>
            <person name="Tani K."/>
            <person name="Simmer R.L."/>
            <person name="Shively L."/>
            <person name="Lindsay S."/>
            <person name="Yoshida A."/>
            <person name="Riggs A.D."/>
        </authorList>
    </citation>
    <scope>NUCLEOTIDE SEQUENCE [GENOMIC DNA] OF 1-21</scope>
</reference>
<reference key="11">
    <citation type="journal article" date="1989" name="Science">
        <title>Genomic sequencing and methylation analysis by ligation mediated PCR.</title>
        <authorList>
            <person name="Pfeifer G.P."/>
            <person name="Steigerwald S.D."/>
            <person name="Mueller P.R."/>
            <person name="Wold B."/>
            <person name="Riggs A.D."/>
        </authorList>
    </citation>
    <scope>NUCLEOTIDE SEQUENCE [GENOMIC DNA] OF 1-14</scope>
</reference>
<reference key="12">
    <citation type="journal article" date="1980" name="J. Biol. Chem.">
        <title>Complete amino acid sequence of human phosphoglycerate kinase. Cyanogen bromide peptides and complete amino acid sequence.</title>
        <authorList>
            <person name="Huang I.-Y."/>
            <person name="Welch C.D."/>
            <person name="Yoshida A."/>
        </authorList>
    </citation>
    <scope>PROTEIN SEQUENCE OF 2-417</scope>
    <source>
        <tissue>Erythrocyte</tissue>
    </source>
</reference>
<reference key="13">
    <citation type="submission" date="2008-12" db="UniProtKB">
        <authorList>
            <person name="Lubec G."/>
            <person name="Vishwanath V."/>
            <person name="Chen W.-Q."/>
            <person name="Sun Y."/>
        </authorList>
    </citation>
    <scope>PROTEIN SEQUENCE OF 23-30; 76-86; 107-123; 157-171; 200-216; 221-264; 280-297; 333-350; 366-382 AND 389-417</scope>
    <scope>IDENTIFICATION BY MASS SPECTROMETRY</scope>
    <source>
        <tissue>Brain</tissue>
        <tissue>Cajal-Retzius cell</tissue>
        <tissue>Fetal brain cortex</tissue>
    </source>
</reference>
<reference key="14">
    <citation type="journal article" date="1990" name="J. Biol. Chem.">
        <title>Functional identity of a primer recognition protein as phosphoglycerate kinase.</title>
        <authorList>
            <person name="Jindal H.K."/>
            <person name="Vishwanatha J.K."/>
        </authorList>
    </citation>
    <scope>PARTIAL PROTEIN SEQUENCE</scope>
    <scope>FUNCTION</scope>
    <source>
        <tissue>Placenta</tissue>
    </source>
</reference>
<reference key="15">
    <citation type="journal article" date="1996" name="Blood Cells Mol. Dis.">
        <title>Hematologically important mutations: molecular abnormalities of phosphoglycerate kinase.</title>
        <authorList>
            <person name="Yoshida A."/>
        </authorList>
    </citation>
    <scope>REVIEW ON VARIANTS</scope>
</reference>
<reference key="16">
    <citation type="journal article" date="2003" name="Nature">
        <title>Proteomic characterization of the human centrosome by protein correlation profiling.</title>
        <authorList>
            <person name="Andersen J.S."/>
            <person name="Wilkinson C.J."/>
            <person name="Mayor T."/>
            <person name="Mortensen P."/>
            <person name="Nigg E.A."/>
            <person name="Mann M."/>
        </authorList>
    </citation>
    <scope>IDENTIFICATION BY MASS SPECTROMETRY</scope>
    <source>
        <tissue>Lymphoblast</tissue>
    </source>
</reference>
<reference key="17">
    <citation type="journal article" date="2005" name="Nat. Biotechnol.">
        <title>Immunoaffinity profiling of tyrosine phosphorylation in cancer cells.</title>
        <authorList>
            <person name="Rush J."/>
            <person name="Moritz A."/>
            <person name="Lee K.A."/>
            <person name="Guo A."/>
            <person name="Goss V.L."/>
            <person name="Spek E.J."/>
            <person name="Zhang H."/>
            <person name="Zha X.-M."/>
            <person name="Polakiewicz R.D."/>
            <person name="Comb M.J."/>
        </authorList>
    </citation>
    <scope>PHOSPHORYLATION [LARGE SCALE ANALYSIS] AT TYR-196</scope>
    <scope>IDENTIFICATION BY MASS SPECTROMETRY [LARGE SCALE ANALYSIS]</scope>
</reference>
<reference key="18">
    <citation type="journal article" date="2006" name="Cell">
        <title>Global, in vivo, and site-specific phosphorylation dynamics in signaling networks.</title>
        <authorList>
            <person name="Olsen J.V."/>
            <person name="Blagoev B."/>
            <person name="Gnad F."/>
            <person name="Macek B."/>
            <person name="Kumar C."/>
            <person name="Mortensen P."/>
            <person name="Mann M."/>
        </authorList>
    </citation>
    <scope>PHOSPHORYLATION [LARGE SCALE ANALYSIS] AT SER-203</scope>
    <scope>IDENTIFICATION BY MASS SPECTROMETRY [LARGE SCALE ANALYSIS]</scope>
    <source>
        <tissue>Cervix carcinoma</tissue>
    </source>
</reference>
<reference key="19">
    <citation type="journal article" date="2008" name="Proc. Natl. Acad. Sci. U.S.A.">
        <title>A quantitative atlas of mitotic phosphorylation.</title>
        <authorList>
            <person name="Dephoure N."/>
            <person name="Zhou C."/>
            <person name="Villen J."/>
            <person name="Beausoleil S.A."/>
            <person name="Bakalarski C.E."/>
            <person name="Elledge S.J."/>
            <person name="Gygi S.P."/>
        </authorList>
    </citation>
    <scope>IDENTIFICATION BY MASS SPECTROMETRY [LARGE SCALE ANALYSIS]</scope>
    <source>
        <tissue>Cervix carcinoma</tissue>
    </source>
</reference>
<reference key="20">
    <citation type="journal article" date="2009" name="Science">
        <title>Lysine acetylation targets protein complexes and co-regulates major cellular functions.</title>
        <authorList>
            <person name="Choudhary C."/>
            <person name="Kumar C."/>
            <person name="Gnad F."/>
            <person name="Nielsen M.L."/>
            <person name="Rehman M."/>
            <person name="Walther T.C."/>
            <person name="Olsen J.V."/>
            <person name="Mann M."/>
        </authorList>
    </citation>
    <scope>ACETYLATION [LARGE SCALE ANALYSIS] AT LYS-11; LYS-48; LYS-75; LYS-86; LYS-97; LYS-131; LYS-146; LYS-199; LYS-267 AND LYS-291</scope>
    <scope>IDENTIFICATION BY MASS SPECTROMETRY [LARGE SCALE ANALYSIS]</scope>
</reference>
<reference key="21">
    <citation type="journal article" date="2010" name="Sci. Signal.">
        <title>Quantitative phosphoproteomics reveals widespread full phosphorylation site occupancy during mitosis.</title>
        <authorList>
            <person name="Olsen J.V."/>
            <person name="Vermeulen M."/>
            <person name="Santamaria A."/>
            <person name="Kumar C."/>
            <person name="Miller M.L."/>
            <person name="Jensen L.J."/>
            <person name="Gnad F."/>
            <person name="Cox J."/>
            <person name="Jensen T.S."/>
            <person name="Nigg E.A."/>
            <person name="Brunak S."/>
            <person name="Mann M."/>
        </authorList>
    </citation>
    <scope>PHOSPHORYLATION [LARGE SCALE ANALYSIS] AT SER-203</scope>
    <scope>IDENTIFICATION BY MASS SPECTROMETRY [LARGE SCALE ANALYSIS]</scope>
    <source>
        <tissue>Cervix carcinoma</tissue>
    </source>
</reference>
<reference key="22">
    <citation type="journal article" date="2011" name="BMC Syst. Biol.">
        <title>Initial characterization of the human central proteome.</title>
        <authorList>
            <person name="Burkard T.R."/>
            <person name="Planyavsky M."/>
            <person name="Kaupe I."/>
            <person name="Breitwieser F.P."/>
            <person name="Buerckstuemmer T."/>
            <person name="Bennett K.L."/>
            <person name="Superti-Furga G."/>
            <person name="Colinge J."/>
        </authorList>
    </citation>
    <scope>IDENTIFICATION BY MASS SPECTROMETRY [LARGE SCALE ANALYSIS]</scope>
</reference>
<reference key="23">
    <citation type="journal article" date="2011" name="Mol. Cell. Proteomics">
        <title>The first identification of lysine malonylation substrates and its regulatory enzyme.</title>
        <authorList>
            <person name="Peng C."/>
            <person name="Lu Z."/>
            <person name="Xie Z."/>
            <person name="Cheng Z."/>
            <person name="Chen Y."/>
            <person name="Tan M."/>
            <person name="Luo H."/>
            <person name="Zhang Y."/>
            <person name="He W."/>
            <person name="Yang K."/>
            <person name="Zwaans B.M."/>
            <person name="Tishkoff D."/>
            <person name="Ho L."/>
            <person name="Lombard D."/>
            <person name="He T.C."/>
            <person name="Dai J."/>
            <person name="Verdin E."/>
            <person name="Ye Y."/>
            <person name="Zhao Y."/>
        </authorList>
    </citation>
    <scope>MALONYLATION AT LYS-131</scope>
</reference>
<reference key="24">
    <citation type="journal article" date="2011" name="Sci. Signal.">
        <title>System-wide temporal characterization of the proteome and phosphoproteome of human embryonic stem cell differentiation.</title>
        <authorList>
            <person name="Rigbolt K.T."/>
            <person name="Prokhorova T.A."/>
            <person name="Akimov V."/>
            <person name="Henningsen J."/>
            <person name="Johansen P.T."/>
            <person name="Kratchmarova I."/>
            <person name="Kassem M."/>
            <person name="Mann M."/>
            <person name="Olsen J.V."/>
            <person name="Blagoev B."/>
        </authorList>
    </citation>
    <scope>PHOSPHORYLATION [LARGE SCALE ANALYSIS] AT SER-203</scope>
    <scope>IDENTIFICATION BY MASS SPECTROMETRY [LARGE SCALE ANALYSIS]</scope>
</reference>
<reference key="25">
    <citation type="journal article" date="2012" name="Proc. Natl. Acad. Sci. U.S.A.">
        <title>N-terminal acetylome analyses and functional insights of the N-terminal acetyltransferase NatB.</title>
        <authorList>
            <person name="Van Damme P."/>
            <person name="Lasa M."/>
            <person name="Polevoda B."/>
            <person name="Gazquez C."/>
            <person name="Elosegui-Artola A."/>
            <person name="Kim D.S."/>
            <person name="De Juan-Pardo E."/>
            <person name="Demeyer K."/>
            <person name="Hole K."/>
            <person name="Larrea E."/>
            <person name="Timmerman E."/>
            <person name="Prieto J."/>
            <person name="Arnesen T."/>
            <person name="Sherman F."/>
            <person name="Gevaert K."/>
            <person name="Aldabe R."/>
        </authorList>
    </citation>
    <scope>ACETYLATION [LARGE SCALE ANALYSIS] AT SER-2</scope>
    <scope>CLEAVAGE OF INITIATOR METHIONINE [LARGE SCALE ANALYSIS]</scope>
    <scope>IDENTIFICATION BY MASS SPECTROMETRY [LARGE SCALE ANALYSIS]</scope>
</reference>
<reference key="26">
    <citation type="journal article" date="2013" name="J. Proteome Res.">
        <title>Toward a comprehensive characterization of a human cancer cell phosphoproteome.</title>
        <authorList>
            <person name="Zhou H."/>
            <person name="Di Palma S."/>
            <person name="Preisinger C."/>
            <person name="Peng M."/>
            <person name="Polat A.N."/>
            <person name="Heck A.J."/>
            <person name="Mohammed S."/>
        </authorList>
    </citation>
    <scope>PHOSPHORYLATION [LARGE SCALE ANALYSIS] AT SER-2; SER-4 AND SER-203</scope>
    <scope>IDENTIFICATION BY MASS SPECTROMETRY [LARGE SCALE ANALYSIS]</scope>
    <source>
        <tissue>Cervix carcinoma</tissue>
        <tissue>Erythroleukemia</tissue>
    </source>
</reference>
<reference key="27">
    <citation type="journal article" date="2014" name="J. Proteomics">
        <title>An enzyme assisted RP-RPLC approach for in-depth analysis of human liver phosphoproteome.</title>
        <authorList>
            <person name="Bian Y."/>
            <person name="Song C."/>
            <person name="Cheng K."/>
            <person name="Dong M."/>
            <person name="Wang F."/>
            <person name="Huang J."/>
            <person name="Sun D."/>
            <person name="Wang L."/>
            <person name="Ye M."/>
            <person name="Zou H."/>
        </authorList>
    </citation>
    <scope>PHOSPHORYLATION [LARGE SCALE ANALYSIS] AT SER-203</scope>
    <scope>IDENTIFICATION BY MASS SPECTROMETRY [LARGE SCALE ANALYSIS]</scope>
    <source>
        <tissue>Liver</tissue>
    </source>
</reference>
<reference key="28">
    <citation type="journal article" date="2015" name="Proteomics">
        <title>N-terminome analysis of the human mitochondrial proteome.</title>
        <authorList>
            <person name="Vaca Jacome A.S."/>
            <person name="Rabilloud T."/>
            <person name="Schaeffer-Reiss C."/>
            <person name="Rompais M."/>
            <person name="Ayoub D."/>
            <person name="Lane L."/>
            <person name="Bairoch A."/>
            <person name="Van Dorsselaer A."/>
            <person name="Carapito C."/>
        </authorList>
    </citation>
    <scope>IDENTIFICATION BY MASS SPECTROMETRY [LARGE SCALE ANALYSIS]</scope>
</reference>
<reference key="29">
    <citation type="journal article" date="2016" name="Hum. Reprod.">
        <title>Characteristics of testis-specific phosphoglycerate kinase 2 and its association with human sperm quality.</title>
        <authorList>
            <person name="Liu X.X."/>
            <person name="Zhang H."/>
            <person name="Shen X.F."/>
            <person name="Liu F.J."/>
            <person name="Liu J."/>
            <person name="Wang W.J."/>
        </authorList>
    </citation>
    <scope>FUNCTION</scope>
    <scope>TISSUE SPECIFICITY</scope>
</reference>
<reference key="30">
    <citation type="journal article" date="2016" name="Mol. Cell">
        <title>Mitochondria-Translocated PGK1 Functions as a Protein Kinase to Coordinate Glycolysis and the TCA Cycle in Tumorigenesis.</title>
        <authorList>
            <person name="Li X."/>
            <person name="Jiang Y."/>
            <person name="Meisenhelder J."/>
            <person name="Yang W."/>
            <person name="Hawke D.H."/>
            <person name="Zheng Y."/>
            <person name="Xia Y."/>
            <person name="Aldape K."/>
            <person name="He J."/>
            <person name="Hunter T."/>
            <person name="Wang L."/>
            <person name="Lu Z."/>
        </authorList>
    </citation>
    <scope>FUNCTION</scope>
    <scope>CATALYTIC ACTIVITY</scope>
    <scope>BIOPHYSICOCHEMICAL PROPERTIES</scope>
    <scope>INTERACTION WITH MAPK1; PDK1 AND PIN1</scope>
    <scope>SUBCELLULAR LOCATION</scope>
    <scope>PHOSPHORYLATION AT SER-203</scope>
    <scope>MUTAGENESIS OF THR-378</scope>
</reference>
<reference key="31">
    <citation type="journal article" date="2018" name="Cell Res.">
        <title>Landscape of the regulatory elements for lysine 2-hydroxyisobutyrylation pathway.</title>
        <authorList>
            <person name="Huang H."/>
            <person name="Luo Z."/>
            <person name="Qi S."/>
            <person name="Huang J."/>
            <person name="Xu P."/>
            <person name="Wang X."/>
            <person name="Gao L."/>
            <person name="Li F."/>
            <person name="Wang J."/>
            <person name="Zhao W."/>
            <person name="Gu W."/>
            <person name="Chen Z."/>
            <person name="Dai L."/>
            <person name="Dai J."/>
            <person name="Zhao Y."/>
        </authorList>
    </citation>
    <scope>HYDROXYBUTYRYLATION AT LYS-220</scope>
</reference>
<reference key="32">
    <citation type="journal article" date="2018" name="Nature">
        <title>A metabolite-derived protein modification integrates glycolysis with KEAP1-NRF2 signalling.</title>
        <authorList>
            <person name="Bollong M.J."/>
            <person name="Lee G."/>
            <person name="Coukos J.S."/>
            <person name="Yun H."/>
            <person name="Zambaldo C."/>
            <person name="Chang J.W."/>
            <person name="Chin E.N."/>
            <person name="Ahmad I."/>
            <person name="Chatterjee A.K."/>
            <person name="Lairson L.L."/>
            <person name="Schultz P.G."/>
            <person name="Moellering R.E."/>
        </authorList>
    </citation>
    <scope>FUNCTION</scope>
    <scope>CATALYTIC ACTIVITY</scope>
    <scope>PATHWAY</scope>
    <scope>ACTIVITY REGULATION</scope>
</reference>
<reference key="33">
    <citation type="journal article" date="2018" name="Mol. Cell">
        <title>p300-mediated lysine 2-hydroxyisobutyrylation regulates glycolysis.</title>
        <authorList>
            <person name="Huang H."/>
            <person name="Tang S."/>
            <person name="Ji M."/>
            <person name="Tang Z."/>
            <person name="Shimada M."/>
            <person name="Liu X."/>
            <person name="Qi S."/>
            <person name="Locasale J.W."/>
            <person name="Roeder R.G."/>
            <person name="Zhao Y."/>
            <person name="Li X."/>
        </authorList>
    </citation>
    <scope>HYDROXYBUTYRYLATION AT LYS-97; LYS-216 AND LYS-323</scope>
</reference>
<reference key="34">
    <citation type="journal article" date="2023" name="Nat. Commun.">
        <title>mcPGK1-dependent mitochondrial import of PGK1 promotes metabolic reprogramming and self-renewal of liver TICs.</title>
        <authorList>
            <person name="Chen Z."/>
            <person name="He Q."/>
            <person name="Lu T."/>
            <person name="Wu J."/>
            <person name="Shi G."/>
            <person name="He L."/>
            <person name="Zong H."/>
            <person name="Liu B."/>
            <person name="Zhu P."/>
        </authorList>
    </citation>
    <scope>FUNCTION</scope>
    <scope>INTERACTION WITH CIRCRNA MCPGK1</scope>
    <scope>SUBCELLULAR LOCATION</scope>
</reference>
<reference evidence="26 27 28 29" key="35">
    <citation type="journal article" date="2008" name="Nucleic Acids Res.">
        <title>Molecular basis for the lack of enantioselectivity of human 3-phosphoglycerate kinase.</title>
        <authorList>
            <person name="Gondeau C."/>
            <person name="Chaloin L."/>
            <person name="Lallemand P."/>
            <person name="Roy B."/>
            <person name="Perigaud C."/>
            <person name="Barman T."/>
            <person name="Varga A."/>
            <person name="Vas M."/>
            <person name="Lionne C."/>
            <person name="Arold S.T."/>
        </authorList>
    </citation>
    <scope>X-RAY CRYSTALLOGRAPHY (1.8 ANGSTROMS) IN COMPLEX WITH PHOSPHOGLYCERATE; L-ADP; D-ADP; L-CDP AND D-CDP</scope>
    <scope>COFACTOR</scope>
    <scope>SUBSTRATE-BINDING SITES</scope>
</reference>
<reference key="36">
    <citation type="journal article" date="1995" name="Blood Cells Mol. Dis.">
        <title>Molecular abnormality of a phosphoglycerate kinase variant (PGK-Alabama).</title>
        <authorList>
            <person name="Yoshida A."/>
            <person name="Twele T.W."/>
            <person name="Dave V."/>
            <person name="Beutler E."/>
        </authorList>
    </citation>
    <scope>VARIANT PGK1D LYS-191 DEL</scope>
</reference>
<reference key="37">
    <citation type="journal article" date="1994" name="Blood">
        <title>Identification of new mutations in two phosphoglycerate kinase (PGK) variants expressing different clinical syndromes: PGK Creteil and PGK Amiens.</title>
        <authorList>
            <person name="Cohen-Solal M."/>
            <person name="Valentin C."/>
            <person name="Plassa F."/>
            <person name="Guillemin G."/>
            <person name="Danze F."/>
            <person name="Jaisson F."/>
            <person name="Rosa R."/>
        </authorList>
    </citation>
    <scope>VARIANTS PGK1D VAL-164 AND ASN-315</scope>
</reference>
<reference key="38">
    <citation type="journal article" date="1996" name="Arch. Biochem. Biophys.">
        <title>Retarded and aberrant splicings caused by single exon mutation in a phosphoglycerate kinase variant.</title>
        <authorList>
            <person name="Ookawara T."/>
            <person name="Dave V."/>
            <person name="Willems P."/>
            <person name="Martin J.J."/>
            <person name="de Barsy T."/>
            <person name="Matthys E."/>
            <person name="Yoshida A."/>
        </authorList>
    </citation>
    <scope>VARIANT PGK1D ALA-252</scope>
</reference>
<reference key="39">
    <citation type="journal article" date="1998" name="Hum. Mutat.">
        <title>A phosphoglycerate kinase mutant (PGK Herlev; D285V) in a Danish patient with isolated chronic hemolytic anemia: mechanism of mutation and structure-function relationships.</title>
        <authorList>
            <person name="Valentin C."/>
            <person name="Birgens H."/>
            <person name="Craescu C.T."/>
            <person name="Broedum-Nielsen K."/>
            <person name="Cohen-Solal M."/>
        </authorList>
    </citation>
    <scope>VARIANT PGK1D VAL-285</scope>
</reference>
<reference key="40">
    <citation type="journal article" date="1991" name="Blood">
        <title>Molecular defect of a phosphoglycerate kinase variant (PGK-Matsue) associated with hemolytic anemia: Leu--&gt;Pro substitution caused by T/A--&gt;C/G transition in exon 3.</title>
        <authorList>
            <person name="Maeda M."/>
            <person name="Yoshida A."/>
        </authorList>
    </citation>
    <scope>VARIANT PGK1D PRO-88</scope>
</reference>
<reference key="41">
    <citation type="journal article" date="1992" name="Blood">
        <title>Molecular abnormalities of a phosphoglycerate kinase variant generated by spontaneous mutation.</title>
        <authorList>
            <person name="Maeda M."/>
            <person name="Bawle E.V."/>
            <person name="Kulkarni R."/>
            <person name="Beutler E."/>
            <person name="Yoshida A."/>
        </authorList>
    </citation>
    <scope>VARIANT PGK1D ARG-316</scope>
</reference>
<reference key="42">
    <citation type="journal article" date="1980" name="J. Biol. Chem.">
        <title>A single amino acid substitution (Asp leads to Asn) in a phosphoglycerate kinase variant (PGK Munchen) associated with enzyme deficiency.</title>
        <authorList>
            <person name="Fujii H."/>
            <person name="Krietsch W.K.G."/>
            <person name="Yoshida A."/>
        </authorList>
    </citation>
    <scope>VARIANT MUNCHEN ASN-268</scope>
    <scope>CATALYTIC ACTIVITY</scope>
    <scope>FUNCTION</scope>
    <scope>PATHWAY</scope>
</reference>
<reference key="43">
    <citation type="journal article" date="1980" name="Hemoglobin">
        <title>Structure and function of normal and variant human phosphoglycerate kinase.</title>
        <authorList>
            <person name="Huang I.-Y."/>
            <person name="Fujii H."/>
            <person name="Yoshida A."/>
        </authorList>
    </citation>
    <scope>VARIANT MUNCHEN ASN-268</scope>
    <scope>VARIANT ASN-352</scope>
</reference>
<reference key="44">
    <citation type="journal article" date="1992" name="Blood">
        <title>A single amino acid substitution (157 Gly--&gt;Val) in a phosphoglycerate kinase variant (PGK Shizuoka) associated with chronic hemolysis and myoglobinuria.</title>
        <authorList>
            <person name="Fujii H."/>
            <person name="Kanno H."/>
            <person name="Hirono A."/>
            <person name="Shiomura T."/>
            <person name="Miwa S."/>
        </authorList>
    </citation>
    <scope>VARIANT PGK1D VAL-158</scope>
</reference>
<reference key="45">
    <citation type="journal article" date="1981" name="Proc. Natl. Acad. Sci. U.S.A.">
        <title>Use of cultured lymphoblastoid cells for the study of abnormal enzymes: molecular abnormality of a phosphoglycerate kinase variant associated with hemolytic anemia.</title>
        <authorList>
            <person name="Fujii H."/>
            <person name="Chen S.-H."/>
            <person name="Akatsuka J."/>
            <person name="Miwa S."/>
            <person name="Yoshida A."/>
        </authorList>
    </citation>
    <scope>VARIANT PGK1D MET-266</scope>
</reference>
<reference key="46">
    <citation type="journal article" date="1980" name="Proc. Natl. Acad. Sci. U.S.A.">
        <title>Molecular abnormality of phosphoglycerate kinase-Uppsala associated with chronic nonspherocytic hemolytic anemia.</title>
        <authorList>
            <person name="Fujii H."/>
            <person name="Yoshida A."/>
        </authorList>
    </citation>
    <scope>VARIANT PGK1D PRO-206</scope>
</reference>